<organism>
    <name type="scientific">Homo sapiens</name>
    <name type="common">Human</name>
    <dbReference type="NCBI Taxonomy" id="9606"/>
    <lineage>
        <taxon>Eukaryota</taxon>
        <taxon>Metazoa</taxon>
        <taxon>Chordata</taxon>
        <taxon>Craniata</taxon>
        <taxon>Vertebrata</taxon>
        <taxon>Euteleostomi</taxon>
        <taxon>Mammalia</taxon>
        <taxon>Eutheria</taxon>
        <taxon>Euarchontoglires</taxon>
        <taxon>Primates</taxon>
        <taxon>Haplorrhini</taxon>
        <taxon>Catarrhini</taxon>
        <taxon>Hominidae</taxon>
        <taxon>Homo</taxon>
    </lineage>
</organism>
<reference key="1">
    <citation type="journal article" date="1995" name="Biochim. Biophys. Acta">
        <title>Human N-methyl-D-aspartate receptor modulatory subunit hNR3: cloning and sequencing of the cDNA and primary structure of the protein.</title>
        <authorList>
            <person name="Adams S.L."/>
            <person name="Foldes R.L."/>
            <person name="Kamboj R.K."/>
        </authorList>
    </citation>
    <scope>NUCLEOTIDE SEQUENCE [MRNA]</scope>
    <scope>VARIANT ASN-407</scope>
    <source>
        <tissue>Fetal brain</tissue>
    </source>
</reference>
<reference key="2">
    <citation type="journal article" date="1996" name="J. Pharmacol. Exp. Ther.">
        <title>Cloning and functional characterization of human heteromeric N-methyl-D-aspartate receptors.</title>
        <authorList>
            <person name="Hess S.D."/>
            <person name="Daggett L.P."/>
            <person name="Crona J."/>
            <person name="Deal C."/>
            <person name="Lu C.-C."/>
            <person name="Urrutia A."/>
            <person name="Chavez-Noriega L."/>
            <person name="Ellis S.B."/>
            <person name="Johnson E.C."/>
            <person name="Velicelebi G."/>
        </authorList>
    </citation>
    <scope>NUCLEOTIDE SEQUENCE [MRNA]</scope>
    <scope>FUNCTION</scope>
    <scope>TRANSPORTER ACTIVITY</scope>
    <scope>SUBCELLULAR LOCATION</scope>
    <scope>SUBUNIT</scope>
    <source>
        <tissue>Fetal brain</tissue>
    </source>
</reference>
<reference key="3">
    <citation type="submission" date="1997-02" db="EMBL/GenBank/DDBJ databases">
        <title>Cloning of GRIN2B human subunit.</title>
        <authorList>
            <person name="Mandich P."/>
            <person name="Schito A.M."/>
            <person name="Pizzuti A."/>
            <person name="Ratti A."/>
        </authorList>
    </citation>
    <scope>NUCLEOTIDE SEQUENCE [MRNA]</scope>
</reference>
<reference key="4">
    <citation type="journal article" date="2004" name="Genome Res.">
        <title>The status, quality, and expansion of the NIH full-length cDNA project: the Mammalian Gene Collection (MGC).</title>
        <authorList>
            <consortium name="The MGC Project Team"/>
        </authorList>
    </citation>
    <scope>NUCLEOTIDE SEQUENCE [LARGE SCALE MRNA]</scope>
    <source>
        <tissue>Cerebellum</tissue>
    </source>
</reference>
<reference key="5">
    <citation type="journal article" date="1994" name="Genomics">
        <title>Mapping of the human NMDAR2B receptor subunit gene (GRIN2B) to chromosome 12p12.</title>
        <authorList>
            <person name="Mandich P."/>
            <person name="Schito A.M."/>
            <person name="Bellone E."/>
            <person name="Antonacci R."/>
            <person name="Finelli P."/>
            <person name="Rocchi M."/>
            <person name="Ajmar F."/>
        </authorList>
    </citation>
    <scope>NUCLEOTIDE SEQUENCE [MRNA] OF 1-294 AND 661-1089</scope>
</reference>
<reference key="6">
    <citation type="journal article" date="1997" name="Neurosci. Lett.">
        <title>mRNA distribution in adult human brain of GRIN2B, a N-methyl-D-aspartate (NMDA) receptor subunit.</title>
        <authorList>
            <person name="Schito A.M."/>
            <person name="Pizzuti A."/>
            <person name="Di Maria E."/>
            <person name="Schenone A."/>
            <person name="Ratti A."/>
            <person name="Defferrari R."/>
            <person name="Bellone E."/>
            <person name="Mancardi G.L."/>
            <person name="Ajmar F."/>
            <person name="Mandich P."/>
        </authorList>
    </citation>
    <scope>TISSUE SPECIFICITY</scope>
</reference>
<reference key="7">
    <citation type="journal article" date="2000" name="J. Biol. Chem.">
        <title>Interaction of the tumor suppressor PTEN/MMAC with a PDZ domain of MAGI3, a novel membrane-associated guanylate kinase.</title>
        <authorList>
            <person name="Wu Y."/>
            <person name="Dowbenko D."/>
            <person name="Spencer S."/>
            <person name="Laura R."/>
            <person name="Lee J."/>
            <person name="Gu Q."/>
            <person name="Lasky L.A."/>
        </authorList>
    </citation>
    <scope>INTERACTION WITH MAGI3</scope>
</reference>
<reference key="8">
    <citation type="journal article" date="2016" name="EMBO J.">
        <title>Synaptonuclear messenger PRR7 inhibits c-Jun ubiquitination and regulates NMDA-mediated excitotoxicity.</title>
        <authorList>
            <person name="Kravchick D.O."/>
            <person name="Karpova A."/>
            <person name="Hrdinka M."/>
            <person name="Lopez-Rojas J."/>
            <person name="Iacobas S."/>
            <person name="Carbonell A.U."/>
            <person name="Iacobas D.A."/>
            <person name="Kreutz M.R."/>
            <person name="Jordan B.A."/>
        </authorList>
    </citation>
    <scope>IDENTIFICATION IN A COMPLEX WITH GRIN1 AND PRR7</scope>
    <scope>INTERACTION WITH PRR7</scope>
</reference>
<reference key="9">
    <citation type="journal article" date="2016" name="J. Med. Chem.">
        <title>Discovery of GluN2A-Selective NMDA Receptor Positive Allosteric Modulators (PAMs): Tuning Deactivation Kinetics via Structure-Based Design.</title>
        <authorList>
            <person name="Volgraf M."/>
            <person name="Sellers B.D."/>
            <person name="Jiang Y."/>
            <person name="Wu G."/>
            <person name="Ly C.Q."/>
            <person name="Villemure E."/>
            <person name="Pastor R.M."/>
            <person name="Yuen P.W."/>
            <person name="Lu A."/>
            <person name="Luo X."/>
            <person name="Liu M."/>
            <person name="Zhang S."/>
            <person name="Sun L."/>
            <person name="Fu Y."/>
            <person name="Lupardus P.J."/>
            <person name="Wallweber H.J."/>
            <person name="Liederer B.M."/>
            <person name="Deshmukh G."/>
            <person name="Plise E."/>
            <person name="Tay S."/>
            <person name="Reynen P."/>
            <person name="Herrington J."/>
            <person name="Gustafson A."/>
            <person name="Liu Y."/>
            <person name="Dirksen A."/>
            <person name="Dietz M.G."/>
            <person name="Liu Y."/>
            <person name="Wang T.M."/>
            <person name="Hanson J.E."/>
            <person name="Hackos D."/>
            <person name="Scearce-Levie K."/>
            <person name="Schwarz J.B."/>
        </authorList>
    </citation>
    <scope>FUNCTION</scope>
    <scope>TRANSPORTER ACTIVITY</scope>
    <scope>SUBCELLULAR LOCATION</scope>
    <scope>SUBUNIT</scope>
</reference>
<reference key="10">
    <citation type="journal article" date="2016" name="Neuron">
        <title>Positive Allosteric Modulators of GluN2A-Containing NMDARs with Distinct Modes of Action and Impacts on Circuit Function.</title>
        <authorList>
            <person name="Hackos D.H."/>
            <person name="Lupardus P.J."/>
            <person name="Grand T."/>
            <person name="Chen Y."/>
            <person name="Wang T.M."/>
            <person name="Reynen P."/>
            <person name="Gustafson A."/>
            <person name="Wallweber H.J."/>
            <person name="Volgraf M."/>
            <person name="Sellers B.D."/>
            <person name="Schwarz J.B."/>
            <person name="Paoletti P."/>
            <person name="Sheng M."/>
            <person name="Zhou Q."/>
            <person name="Hanson J.E."/>
        </authorList>
    </citation>
    <scope>FUNCTION</scope>
    <scope>TRANSPORTER ACTIVITY</scope>
    <scope>SUBCELLULAR LOCATION</scope>
    <scope>SUBUNIT</scope>
</reference>
<reference key="11">
    <citation type="journal article" date="2017" name="J. Neurosci.">
        <title>Mutation Disrupts Dendritic Morphology and Synaptic Transmission, and Causes ASD-Related Behaviors.</title>
        <authorList>
            <person name="Stephenson J.R."/>
            <person name="Wang X."/>
            <person name="Perfitt T.L."/>
            <person name="Parrish W.P."/>
            <person name="Shonesy B.C."/>
            <person name="Marks C.R."/>
            <person name="Mortlock D.P."/>
            <person name="Nakagawa T."/>
            <person name="Sutcliffe J.S."/>
            <person name="Colbran R.J."/>
        </authorList>
    </citation>
    <scope>INTERACTION WITH CAMK2A</scope>
</reference>
<reference key="12">
    <citation type="journal article" date="2017" name="Mol. Pharmacol.">
        <title>Functional evaluation of a de novo GRIN2A mutation identified in a patient with profound global developmental delay and refractory epilepsy.</title>
        <authorList>
            <person name="Chen W."/>
            <person name="Tankovic A."/>
            <person name="Burger P.B."/>
            <person name="Kusumoto H."/>
            <person name="Traynelis S.F."/>
            <person name="Yuan H."/>
        </authorList>
    </citation>
    <scope>FUNCTION</scope>
    <scope>TRANSPORTER ACTIVITY</scope>
    <scope>SUBCELLULAR LOCATION</scope>
    <scope>SUBUNIT</scope>
    <scope>MUTAGENESIS OF MET-818</scope>
</reference>
<reference evidence="36 37 38" key="13">
    <citation type="journal article" date="2016" name="Mol. Pharmacol.">
        <title>A Novel Binding Mode Reveals Two Distinct Classes of NMDA Receptor GluN2B-selective Antagonists.</title>
        <authorList>
            <person name="Stroebel D."/>
            <person name="Buhl D.L."/>
            <person name="Knafels J.D."/>
            <person name="Chanda P.K."/>
            <person name="Green M."/>
            <person name="Sciabola S."/>
            <person name="Mony L."/>
            <person name="Paoletti P."/>
            <person name="Pandit J."/>
        </authorList>
    </citation>
    <scope>X-RAY CRYSTALLOGRAPHY (2.76 ANGSTROMS) OF 31-394 IN COMPLEX WITH GRIN1 AND SYNTHETIC INHIBITOR IFENPRODIL</scope>
    <scope>SUBUNIT</scope>
    <scope>GLYCOSYLATION AT ASN-74 AND ASN-341</scope>
    <scope>DISULFIDE BONDS</scope>
</reference>
<reference evidence="39" key="14">
    <citation type="journal article" date="2021" name="Nature">
        <title>Structural basis of ketamine action on human NMDA receptors.</title>
        <authorList>
            <person name="Zhang Y."/>
            <person name="Ye F."/>
            <person name="Zhang T."/>
            <person name="Lv S."/>
            <person name="Zhou L."/>
            <person name="Du D."/>
            <person name="Lin H."/>
            <person name="Guo F."/>
            <person name="Luo C."/>
            <person name="Zhu S."/>
        </authorList>
    </citation>
    <scope>STRUCTURE BY ELECTRON MICROSCOPY (4.07 ANGSTROMS) OF 1-842 IN COMPLEX WITH GRIN1</scope>
    <scope>SUBUNIT</scope>
    <scope>GLYCOSYLATION AT ASN-341; ASN-542 AND ASN-688</scope>
    <scope>DISULFIDE BONDS</scope>
    <scope>TOPOLOGY</scope>
</reference>
<reference key="15">
    <citation type="journal article" date="2010" name="Nat. Genet.">
        <title>Mutations in GRIN2A and GRIN2B encoding regulatory subunits of NMDA receptors cause variable neurodevelopmental phenotypes.</title>
        <authorList>
            <person name="Endele S."/>
            <person name="Rosenberger G."/>
            <person name="Geider K."/>
            <person name="Popp B."/>
            <person name="Tamer C."/>
            <person name="Stefanova I."/>
            <person name="Milh M."/>
            <person name="Kortum F."/>
            <person name="Fritsch A."/>
            <person name="Pientka F.K."/>
            <person name="Hellenbroich Y."/>
            <person name="Kalscheuer V.M."/>
            <person name="Kohlhase J."/>
            <person name="Moog U."/>
            <person name="Rappold G."/>
            <person name="Rauch A."/>
            <person name="Ropers H.H."/>
            <person name="von Spiczak S."/>
            <person name="Tonnies H."/>
            <person name="Villeneuve N."/>
            <person name="Villard L."/>
            <person name="Zabel B."/>
            <person name="Zenker M."/>
            <person name="Laube B."/>
            <person name="Reis A."/>
            <person name="Wieczorek D."/>
            <person name="Van Maldergem L."/>
            <person name="Kutsche K."/>
        </authorList>
    </citation>
    <scope>VARIANT MRD6 CYS-682</scope>
    <scope>CHARACTERIZATION OF VARIANT MRD6 CYS-682</scope>
    <scope>CHROMOSOMAL TRANSLOCATIONS</scope>
</reference>
<reference key="16">
    <citation type="journal article" date="2011" name="Transl. Psychiatry">
        <title>Rare mutations in N-methyl-D-aspartate glutamate receptors in autism spectrum disorders and schizophrenia.</title>
        <authorList>
            <consortium name="S2D team"/>
            <person name="Tarabeux J."/>
            <person name="Kebir O."/>
            <person name="Gauthier J."/>
            <person name="Hamdan F.F."/>
            <person name="Xiong L."/>
            <person name="Piton A."/>
            <person name="Spiegelman D."/>
            <person name="Henrion E."/>
            <person name="Millet B."/>
            <person name="Fathalli F."/>
            <person name="Joober R."/>
            <person name="Rapoport J.L."/>
            <person name="DeLisi L.E."/>
            <person name="Fombonne E."/>
            <person name="Mottron L."/>
            <person name="Forget-Dubois N."/>
            <person name="Boivin M."/>
            <person name="Michaud J.L."/>
            <person name="Drapeau P."/>
            <person name="Lafreniere R.G."/>
            <person name="Rouleau G.A."/>
            <person name="Krebs M.O."/>
        </authorList>
    </citation>
    <scope>VARIANTS ILE-18; ASN-50; VAL-271; MET-362; VAL-825; ARG-1014; SER-1026; ARG-1342; LEU-1415; PHE-1424 AND PHE-1452</scope>
</reference>
<reference key="17">
    <citation type="journal article" date="2012" name="N. Engl. J. Med.">
        <title>Diagnostic exome sequencing in persons with severe intellectual disability.</title>
        <authorList>
            <person name="de Ligt J."/>
            <person name="Willemsen M.H."/>
            <person name="van Bon B.W."/>
            <person name="Kleefstra T."/>
            <person name="Yntema H.G."/>
            <person name="Kroes T."/>
            <person name="Vulto-van Silfhout A.T."/>
            <person name="Koolen D.A."/>
            <person name="de Vries P."/>
            <person name="Gilissen C."/>
            <person name="del Rosario M."/>
            <person name="Hoischen A."/>
            <person name="Scheffer H."/>
            <person name="de Vries B.B."/>
            <person name="Brunner H.G."/>
            <person name="Veltman J.A."/>
            <person name="Vissers L.E."/>
        </authorList>
    </citation>
    <scope>VARIANT MRD6 LEU-553</scope>
</reference>
<reference key="18">
    <citation type="journal article" date="2012" name="Science">
        <title>Multiplex targeted sequencing identifies recurrently mutated genes in autism spectrum disorders.</title>
        <authorList>
            <person name="O'Roak B.J."/>
            <person name="Vives L."/>
            <person name="Fu W."/>
            <person name="Egertson J.D."/>
            <person name="Stanaway I.B."/>
            <person name="Phelps I.G."/>
            <person name="Carvill G."/>
            <person name="Kumar A."/>
            <person name="Lee C."/>
            <person name="Ankenman K."/>
            <person name="Munson J."/>
            <person name="Hiatt J.B."/>
            <person name="Turner E.H."/>
            <person name="Levy R."/>
            <person name="O'Day D.R."/>
            <person name="Krumm N."/>
            <person name="Coe B.P."/>
            <person name="Martin B.K."/>
            <person name="Borenstein E."/>
            <person name="Nickerson D.A."/>
            <person name="Mefford H.C."/>
            <person name="Doherty D."/>
            <person name="Akey J.M."/>
            <person name="Bernier R."/>
            <person name="Eichler E.E."/>
            <person name="Shendure J."/>
        </authorList>
    </citation>
    <scope>VARIANT MRD6 TYR-456</scope>
</reference>
<reference key="19">
    <citation type="journal article" date="2014" name="Ann. Neurol.">
        <title>GRIN2B mutations in West syndrome and intellectual disability with focal epilepsy.</title>
        <authorList>
            <person name="Lemke J.R."/>
            <person name="Hendrickx R."/>
            <person name="Geider K."/>
            <person name="Laube B."/>
            <person name="Schwake M."/>
            <person name="Harvey R.J."/>
            <person name="James V.M."/>
            <person name="Pepler A."/>
            <person name="Steiner I."/>
            <person name="Hortnagel K."/>
            <person name="Neidhardt J."/>
            <person name="Ruf S."/>
            <person name="Wolff M."/>
            <person name="Bartholdi D."/>
            <person name="Caraballo R."/>
            <person name="Platzer K."/>
            <person name="Suls A."/>
            <person name="De Jonghe P."/>
            <person name="Biskup S."/>
            <person name="Weckhuysen S."/>
        </authorList>
    </citation>
    <scope>INVOLVEMENT IN DEE27</scope>
    <scope>VARIANTS DEE27 HIS-540; ILE-615 AND GLY-618</scope>
    <scope>CHARACTERIZATION OF VARIANTS DEE27 HIS-540; ILE-615 AND GLY-618</scope>
    <scope>FUNCTION</scope>
    <scope>TRANSPORTER ACTIVITY</scope>
</reference>
<reference key="20">
    <citation type="journal article" date="2014" name="Mol. Genet. Metab.">
        <title>Three rare diseases in one sib pair: RAI1, PCK1, GRIN2B mutations associated with Smith-Magenis Syndrome, cytosolic PEPCK deficiency and NMDA receptor glutamate insensitivity.</title>
        <authorList>
            <person name="Adams D.R."/>
            <person name="Yuan H."/>
            <person name="Holyoak T."/>
            <person name="Arajs K.H."/>
            <person name="Hakimi P."/>
            <person name="Markello T.C."/>
            <person name="Wolfe L.A."/>
            <person name="Vilboux T."/>
            <person name="Burton B.K."/>
            <person name="Fajardo K.F."/>
            <person name="Grahame G."/>
            <person name="Holloman C."/>
            <person name="Sincan M."/>
            <person name="Smith A.C."/>
            <person name="Wells G.A."/>
            <person name="Huang Y."/>
            <person name="Vega H."/>
            <person name="Snyder J.P."/>
            <person name="Golas G.A."/>
            <person name="Tifft C.J."/>
            <person name="Boerkoel C.F."/>
            <person name="Hanson R.W."/>
            <person name="Traynelis S.F."/>
            <person name="Kerr D.S."/>
            <person name="Gahl W.A."/>
        </authorList>
    </citation>
    <scope>VARIANT MRD6 GLY-413</scope>
    <scope>CHARACTERIZATION OF VARIANT MRD6 GLY-413</scope>
    <scope>FUNCTION</scope>
    <scope>TRANSPORTER ACTIVITY</scope>
</reference>
<reference key="21">
    <citation type="journal article" date="2014" name="PLoS Genet.">
        <title>De novo mutations in moderate or severe intellectual disability.</title>
        <authorList>
            <person name="Hamdan F.F."/>
            <person name="Srour M."/>
            <person name="Capo-Chichi J.M."/>
            <person name="Daoud H."/>
            <person name="Nassif C."/>
            <person name="Patry L."/>
            <person name="Massicotte C."/>
            <person name="Ambalavanan A."/>
            <person name="Spiegelman D."/>
            <person name="Diallo O."/>
            <person name="Henrion E."/>
            <person name="Dionne-Laporte A."/>
            <person name="Fougerat A."/>
            <person name="Pshezhetsky A.V."/>
            <person name="Venkateswaran S."/>
            <person name="Rouleau G.A."/>
            <person name="Michaud J.L."/>
        </authorList>
    </citation>
    <scope>VARIANT MRD6 GLU-820</scope>
</reference>
<reference key="22">
    <citation type="journal article" date="2016" name="Am. J. Hum. Genet.">
        <title>Mechanistic insight into NMDA receptor dysregulation by rare variants in the GluN2A and GluN2B agonist binding domains.</title>
        <authorList>
            <person name="Swanger S.A."/>
            <person name="Chen W."/>
            <person name="Wells G."/>
            <person name="Burger P.B."/>
            <person name="Tankovic A."/>
            <person name="Bhattacharya S."/>
            <person name="Strong K.L."/>
            <person name="Hu C."/>
            <person name="Kusumoto H."/>
            <person name="Zhang J."/>
            <person name="Adams D.R."/>
            <person name="Millichap J.J."/>
            <person name="Petrovski S."/>
            <person name="Traynelis S.F."/>
            <person name="Yuan H."/>
        </authorList>
    </citation>
    <scope>VARIANTS MRD6 ARG-436; PHE-461 AND HIS-696</scope>
    <scope>CHARACTERIZATION OF VARIANTS MRD6 GLY-413; ARG-436; TYR-456; PHE-461; CYS-682 AND HIS-696</scope>
    <scope>CHARACTERIZATION OF VARIANT DEE27 HIS-540</scope>
    <scope>FUNCTION</scope>
    <scope>TRANSPORTER ACTIVITY</scope>
    <scope>SUBCELLULAR LOCATION</scope>
</reference>
<reference key="23">
    <citation type="journal article" date="2017" name="Hum. Mutat.">
        <title>Diagnostic targeted resequencing in 349 patients with drug-resistant pediatric epilepsies identifies causative mutations in 30 different genes.</title>
        <authorList>
            <consortium name="Clinical Study Group"/>
            <person name="Parrini E."/>
            <person name="Marini C."/>
            <person name="Mei D."/>
            <person name="Galuppi A."/>
            <person name="Cellini E."/>
            <person name="Pucatti D."/>
            <person name="Chiti L."/>
            <person name="Rutigliano D."/>
            <person name="Bianchini C."/>
            <person name="Virdo S."/>
            <person name="De Vita D."/>
            <person name="Bigoni S."/>
            <person name="Barba C."/>
            <person name="Mari F."/>
            <person name="Montomoli M."/>
            <person name="Pisano T."/>
            <person name="Rosati A."/>
            <person name="Guerrini R."/>
        </authorList>
    </citation>
    <scope>VARIANT DEE27 MET-15</scope>
    <scope>VARIANT ALA-1439</scope>
</reference>
<reference key="24">
    <citation type="journal article" date="2017" name="PLoS Genet.">
        <title>Molecular mechanism of disease-associated mutations in the pre-M1 helix of NMDA receptors and potential rescue pharmacology.</title>
        <authorList>
            <person name="Ogden K.K."/>
            <person name="Chen W."/>
            <person name="Swanger S.A."/>
            <person name="McDaniel M.J."/>
            <person name="Fan L.Z."/>
            <person name="Hu C."/>
            <person name="Tankovic A."/>
            <person name="Kusumoto H."/>
            <person name="Kosobucki G.J."/>
            <person name="Schulien A.J."/>
            <person name="Su Z."/>
            <person name="Pecha J."/>
            <person name="Bhattacharya S."/>
            <person name="Petrovski S."/>
            <person name="Cohen A.E."/>
            <person name="Aizenman E."/>
            <person name="Traynelis S.F."/>
            <person name="Yuan H."/>
        </authorList>
    </citation>
    <scope>CHARACTERIZATION OF VARIANT MRD6 LEU-553</scope>
    <scope>FUNCTION</scope>
    <scope>TRANSPORTER ACTIVITY</scope>
    <scope>SUBCELLULAR LOCATION</scope>
    <scope>MUTAGENESIS OF PRO-553</scope>
</reference>
<reference key="25">
    <citation type="journal article" date="2024" name="Cell. Mol. Life Sci.">
        <title>De novo GRIN variants in M3 helix associated with neurological disorders control channel gating of NMDA receptor.</title>
        <authorList>
            <person name="Xu Y."/>
            <person name="Song R."/>
            <person name="Perszyk R.E."/>
            <person name="Chen W."/>
            <person name="Kim S."/>
            <person name="Park K.L."/>
            <person name="Allen J.P."/>
            <person name="Nocilla K.A."/>
            <person name="Zhang J."/>
            <person name="Xiang Wei W."/>
            <person name="Tankovic A."/>
            <person name="McDaniels E.D."/>
            <person name="Sheikh R."/>
            <person name="Mizu R.K."/>
            <person name="Karamchandani M.M."/>
            <person name="Hu C."/>
            <person name="Kusumoto H."/>
            <person name="Pecha J."/>
            <person name="Cappuccio G."/>
            <person name="Gaitanis J."/>
            <person name="Sullivan J."/>
            <person name="Shashi V."/>
            <person name="Petrovski S."/>
            <person name="Jauss R.T."/>
            <person name="Lee H.K."/>
            <person name="Bozarth X."/>
            <person name="Lynch D.R."/>
            <person name="Helbig I."/>
            <person name="Pierson T.M."/>
            <person name="Boerkoel C.F."/>
            <person name="Myers S.J."/>
            <person name="Lemke J.R."/>
            <person name="Benke T.A."/>
            <person name="Yuan H."/>
            <person name="Traynelis S.F."/>
        </authorList>
    </citation>
    <scope>VARIANTS DEE27 CYS-646 AND SER-649</scope>
    <scope>CHARACTERIZATION OF VARIANTS DEE27 CYS-646 AND SER-649</scope>
    <scope>VARIANTS MRD6 PRO-652 AND VAL-653</scope>
    <scope>CHARACTERIZATION OF VARIANT MRD6 PRO-652</scope>
    <scope>MUTAGENESIS OF ALA-636; ALA-639; ILE-641; ASN-649; ALA-652 AND ILE-655</scope>
    <scope>SUBCELLULAR LOCATION</scope>
    <scope>FUNCTION</scope>
    <scope>TRANSPORTER ACTIVITY</scope>
</reference>
<accession>Q13224</accession>
<accession>Q12919</accession>
<accession>Q13220</accession>
<accession>Q13225</accession>
<accession>Q14CU4</accession>
<accession>Q9UM56</accession>
<comment type="function">
    <text evidence="3 5 13 14 16 18 20 22 23 26 28">Component of N-methyl-D-aspartate (NMDA) receptors (NMDARs) that function as heterotetrameric, ligand-gated cation channels with high calcium permeability and voltage-dependent block by Mg(2+) (PubMed:24272827, PubMed:24863970, PubMed:26875626, PubMed:26919761, PubMed:27839871, PubMed:28095420, PubMed:28126851, PubMed:38538865, PubMed:8768735). Participates in synaptic plasticity for learning and memory formation by contributing to the long-term depression (LTD) of hippocampus membrane currents (By similarity). Channel activation requires binding of the neurotransmitter L-glutamate to the GluN2 subunit, glycine or D-serine binding to the GluN1 subunit, plus membrane depolarization to eliminate channel inhibition by Mg(2+) (PubMed:24272827, PubMed:24863970, PubMed:26875626, PubMed:26919761, PubMed:27839871, PubMed:28095420, PubMed:28126851, PubMed:38538865, PubMed:8768735). NMDARs mediate simultaneously the potasium efflux and the influx of calcium and sodium (By similarity). Each GluN2 subunit confers differential attributes to channel properties, including activation, deactivation and desensitization kinetics, pH sensitivity, Ca2(+) permeability, and binding to allosteric modulators (PubMed:26875626, PubMed:28095420, PubMed:28126851, PubMed:38538865, PubMed:8768735). In concert with DAPK1 at extrasynaptic sites, acts as a central mediator for stroke damage. Its phosphorylation at Ser-1303 by DAPK1 enhances synaptic NMDA receptor channel activity inducing injurious Ca2+ influx through them, resulting in an irreversible neuronal death (By similarity).</text>
</comment>
<comment type="catalytic activity">
    <reaction evidence="13 14 16 18 20 22 23 26 28">
        <text>Ca(2+)(in) = Ca(2+)(out)</text>
        <dbReference type="Rhea" id="RHEA:29671"/>
        <dbReference type="ChEBI" id="CHEBI:29108"/>
    </reaction>
</comment>
<comment type="catalytic activity">
    <reaction evidence="13 26">
        <text>Na(+)(in) = Na(+)(out)</text>
        <dbReference type="Rhea" id="RHEA:34963"/>
        <dbReference type="ChEBI" id="CHEBI:29101"/>
    </reaction>
</comment>
<comment type="catalytic activity">
    <reaction evidence="3">
        <text>K(+)(in) = K(+)(out)</text>
        <dbReference type="Rhea" id="RHEA:29463"/>
        <dbReference type="ChEBI" id="CHEBI:29103"/>
    </reaction>
</comment>
<comment type="subunit">
    <text evidence="4 5 8 16 17 18 19 23 24 25 28">Heterotetramer (PubMed:34321660). Forms heterotetrameric channels composed of two GluN1/zeta subunits (GRIN1), and two identical GluN2/epsilon subunits (GRIN2A, GRIN2B, GRIN2C or GRIN2D) or GluN3 subunits (GRIN3A or GRIN3B) (in vitro) (PubMed:26875626, PubMed:26912815, PubMed:26919761, PubMed:28126851, PubMed:34321660, PubMed:8768735). Can also form heterotetrameric channels that contain at least two GluN1 subunits and at least two different GluN2 subunits (or a combination of one GluN2 and one GluN3 subunits) (in vitro) (By similarity). In vivo, the subunit composition may depend on the expression levels of the different subunits (Probable). Found in a complex with GRIN1 and GRIN3B. Found in a complex with GRIN1, GRIN3A and PPP2CB. Interacts with PDZ domains of PATJ, DLG3 and DLG4. Interacts with HIP1 and NETO1 (By similarity). Interacts with MAGI3 (PubMed:10748157). Interacts with DAPK1 (By similarity). Found in a complex with GRIN1 and PRR7 (PubMed:27458189). Interacts with PRR7 (PubMed:27458189). Interacts with CAMK2A (PubMed:28130356). Interacts with ARC; preventing ARC oligomerization (By similarity). Interacts with TMEM25 (By similarity). Interacts (via the extreme C-terminus) with FRMPD2 (via the second PDZ domain); the interaction is direct and is likely to promote NMDAR-mediated neural signal transmission (By similarity). Interacts with FAM81A; the interaction facilitates condensate formation via liquid-liquid phase separation (By similarity).</text>
</comment>
<comment type="interaction">
    <interactant intactId="EBI-2256942">
        <id>Q13224</id>
    </interactant>
    <interactant intactId="EBI-1383687">
        <id>Q9UQM7</id>
        <label>CAMK2A</label>
    </interactant>
    <organismsDiffer>false</organismsDiffer>
    <experiments>3</experiments>
</comment>
<comment type="interaction">
    <interactant intactId="EBI-2256942">
        <id>Q13224</id>
    </interactant>
    <interactant intactId="EBI-357481">
        <id>Q12959</id>
        <label>DLG1</label>
    </interactant>
    <organismsDiffer>false</organismsDiffer>
    <experiments>4</experiments>
</comment>
<comment type="interaction">
    <interactant intactId="EBI-2256942">
        <id>Q13224</id>
    </interactant>
    <interactant intactId="EBI-80389">
        <id>P78352</id>
        <label>DLG4</label>
    </interactant>
    <organismsDiffer>false</organismsDiffer>
    <experiments>4</experiments>
</comment>
<comment type="interaction">
    <interactant intactId="EBI-2256942">
        <id>Q13224</id>
    </interactant>
    <interactant intactId="EBI-27070564">
        <id>Q05586-1</id>
        <label>GRIN1</label>
    </interactant>
    <organismsDiffer>false</organismsDiffer>
    <experiments>2</experiments>
</comment>
<comment type="interaction">
    <interactant intactId="EBI-2256942">
        <id>Q13224</id>
    </interactant>
    <interactant intactId="EBI-349596">
        <id>Q62936</id>
        <label>Dlg3</label>
    </interactant>
    <organismsDiffer>true</organismsDiffer>
    <experiments>4</experiments>
</comment>
<comment type="interaction">
    <interactant intactId="EBI-2256942">
        <id>Q13224</id>
    </interactant>
    <interactant intactId="EBI-375655">
        <id>P31016</id>
        <label>Dlg4</label>
    </interactant>
    <organismsDiffer>true</organismsDiffer>
    <experiments>2</experiments>
</comment>
<comment type="interaction">
    <interactant intactId="EBI-2256942">
        <id>Q13224</id>
    </interactant>
    <interactant intactId="EBI-2008988">
        <id>P62139</id>
        <label>PPP1CA</label>
    </interactant>
    <organismsDiffer>true</organismsDiffer>
    <experiments>2</experiments>
</comment>
<comment type="subcellular location">
    <subcellularLocation>
        <location evidence="16 18 20 22 23 26 28">Cell membrane</location>
        <topology evidence="25">Multi-pass membrane protein</topology>
    </subcellularLocation>
    <subcellularLocation>
        <location evidence="4">Postsynaptic cell membrane</location>
        <topology evidence="25">Multi-pass membrane protein</topology>
    </subcellularLocation>
    <subcellularLocation>
        <location evidence="20">Cell projection</location>
        <location evidence="20">Dendrite</location>
    </subcellularLocation>
    <subcellularLocation>
        <location evidence="5">Late endosome</location>
    </subcellularLocation>
    <subcellularLocation>
        <location evidence="5">Lysosome</location>
    </subcellularLocation>
    <subcellularLocation>
        <location evidence="5">Cytoplasm</location>
        <location evidence="5">Cytoskeleton</location>
    </subcellularLocation>
    <text evidence="5">Co-localizes with the motor protein KIF17 along microtubules.</text>
</comment>
<comment type="tissue specificity">
    <text evidence="29">Primarily found in the fronto-parieto-temporal cortex and hippocampus pyramidal cells, lower expression in the basal ganglia.</text>
</comment>
<comment type="domain">
    <text evidence="4">The extracellular N-terminal domain (NTD) endows NMDARs with a unique capacity for allosteric modulation, harboring several binding sites for small molecule ligands that act as subunit-specific allosteric modulators of ion channel activity.</text>
</comment>
<comment type="domain">
    <text evidence="4">A hydrophobic region that gives rise to the prediction of a transmembrane span does not cross the membrane, but is part of a discontinuously helical region that dips into the membrane and is probably part of the pore and of the selectivity filter.</text>
</comment>
<comment type="PTM">
    <text evidence="4 5">Phosphorylated on tyrosine residues (By similarity). Phosphorylation at Ser-1303 by DAPK1 enhances synaptic NMDA receptor channel activity (By similarity).</text>
</comment>
<comment type="disease" evidence="9 11 12 14 15 20 22 26">
    <disease id="DI-03128">
        <name>Intellectual developmental disorder, autosomal dominant 6, with or without seizures</name>
        <acronym>MRD6</acronym>
        <description>A disorder characterized by significantly below average general intellectual functioning associated with impairments in adaptive behavior and manifested during the developmental period. MRD6 additional features may include seizures, hypotonia, abnormal movements, such as dystonia, and autistic features.</description>
        <dbReference type="MIM" id="613970"/>
    </disease>
    <text>The disease is caused by variants affecting the gene represented in this entry.</text>
</comment>
<comment type="disease" evidence="13 20 21 26">
    <disease id="DI-04289">
        <name>Developmental and epileptic encephalopathy 27</name>
        <acronym>DEE27</acronym>
        <description>A form of epileptic encephalopathy, a heterogeneous group of severe early-onset epilepsies characterized by refractory seizures, neurodevelopmental impairment, and poor prognosis. Development is normal prior to seizure onset, after which cognitive and motor delays become apparent.</description>
        <dbReference type="MIM" id="616139"/>
    </disease>
    <text>The disease is caused by variants affecting the gene represented in this entry.</text>
</comment>
<comment type="disease">
    <text>A chromosomal aberrations involving GRIN2B has been found in patients with intellectual disability. Translocations t(9;12)(p23;p13.1) and t(10;12)(q21.1;p13.1) with a common breakpoint in 12p13.1.</text>
</comment>
<comment type="similarity">
    <text evidence="34">Belongs to the glutamate-gated ion channel (TC 1.A.10.1) family. NR2B/GRIN2B subfamily.</text>
</comment>
<proteinExistence type="evidence at protein level"/>
<protein>
    <recommendedName>
        <fullName evidence="34">Glutamate receptor ionotropic, NMDA 2B</fullName>
        <shortName evidence="30">GluN2B</shortName>
    </recommendedName>
    <alternativeName>
        <fullName>Glutamate [NMDA] receptor subunit epsilon-2</fullName>
    </alternativeName>
    <alternativeName>
        <fullName>N-methyl D-aspartate receptor subtype 2B</fullName>
        <shortName evidence="31">NMDAR2B</shortName>
        <shortName>NR2B</shortName>
    </alternativeName>
    <alternativeName>
        <fullName>N-methyl-D-aspartate receptor subunit 3</fullName>
        <shortName>NR3</shortName>
        <shortName evidence="32">hNR3</shortName>
    </alternativeName>
</protein>
<feature type="signal peptide" evidence="6">
    <location>
        <begin position="1"/>
        <end position="26"/>
    </location>
</feature>
<feature type="chain" id="PRO_0000011577" description="Glutamate receptor ionotropic, NMDA 2B">
    <location>
        <begin position="27"/>
        <end position="1484"/>
    </location>
</feature>
<feature type="topological domain" description="Extracellular" evidence="25 39">
    <location>
        <begin position="27"/>
        <end position="555"/>
    </location>
</feature>
<feature type="transmembrane region" description="Helical" evidence="25 39">
    <location>
        <begin position="556"/>
        <end position="576"/>
    </location>
</feature>
<feature type="topological domain" description="Cytoplasmic" evidence="25 39">
    <location>
        <begin position="577"/>
        <end position="601"/>
    </location>
</feature>
<feature type="intramembrane region" description="Discontinuously helical" evidence="25 39">
    <location>
        <begin position="602"/>
        <end position="613"/>
    </location>
</feature>
<feature type="topological domain" description="Cytoplasmic" evidence="25 39">
    <location>
        <begin position="614"/>
        <end position="627"/>
    </location>
</feature>
<feature type="transmembrane region" description="Helical" evidence="25 39">
    <location>
        <begin position="628"/>
        <end position="647"/>
    </location>
</feature>
<feature type="topological domain" description="Extracellular" evidence="25 39">
    <location>
        <begin position="648"/>
        <end position="819"/>
    </location>
</feature>
<feature type="transmembrane region" description="Helical" evidence="25 39">
    <location>
        <begin position="820"/>
        <end position="835"/>
    </location>
</feature>
<feature type="topological domain" description="Cytoplasmic" evidence="25 39">
    <location>
        <begin position="836"/>
        <end position="1484"/>
    </location>
</feature>
<feature type="region of interest" description="Pore-forming" evidence="2">
    <location>
        <begin position="604"/>
        <end position="623"/>
    </location>
</feature>
<feature type="region of interest" description="Disordered" evidence="7">
    <location>
        <begin position="1074"/>
        <end position="1097"/>
    </location>
</feature>
<feature type="region of interest" description="Disordered" evidence="7">
    <location>
        <begin position="1161"/>
        <end position="1194"/>
    </location>
</feature>
<feature type="region of interest" description="Disordered" evidence="7">
    <location>
        <begin position="1271"/>
        <end position="1301"/>
    </location>
</feature>
<feature type="region of interest" description="Interaction with DAPK1" evidence="5">
    <location>
        <begin position="1292"/>
        <end position="1304"/>
    </location>
</feature>
<feature type="short sequence motif" description="PDZ-binding" evidence="1">
    <location>
        <begin position="1482"/>
        <end position="1484"/>
    </location>
</feature>
<feature type="compositionally biased region" description="Polar residues" evidence="7">
    <location>
        <begin position="1272"/>
        <end position="1289"/>
    </location>
</feature>
<feature type="compositionally biased region" description="Basic residues" evidence="7">
    <location>
        <begin position="1290"/>
        <end position="1301"/>
    </location>
</feature>
<feature type="binding site" evidence="4">
    <location>
        <position position="127"/>
    </location>
    <ligand>
        <name>Zn(2+)</name>
        <dbReference type="ChEBI" id="CHEBI:29105"/>
        <label>1</label>
        <note>inhibitor</note>
    </ligand>
</feature>
<feature type="binding site" evidence="4">
    <location>
        <position position="284"/>
    </location>
    <ligand>
        <name>Zn(2+)</name>
        <dbReference type="ChEBI" id="CHEBI:29105"/>
        <label>1</label>
        <note>inhibitor</note>
    </ligand>
</feature>
<feature type="binding site" evidence="4">
    <location>
        <position position="514"/>
    </location>
    <ligand>
        <name>L-glutamate</name>
        <dbReference type="ChEBI" id="CHEBI:29985"/>
    </ligand>
</feature>
<feature type="binding site" evidence="4">
    <location>
        <position position="519"/>
    </location>
    <ligand>
        <name>L-glutamate</name>
        <dbReference type="ChEBI" id="CHEBI:29985"/>
    </ligand>
</feature>
<feature type="binding site" evidence="4">
    <location>
        <begin position="690"/>
        <end position="691"/>
    </location>
    <ligand>
        <name>L-glutamate</name>
        <dbReference type="ChEBI" id="CHEBI:29985"/>
    </ligand>
</feature>
<feature type="binding site" evidence="4">
    <location>
        <position position="732"/>
    </location>
    <ligand>
        <name>L-glutamate</name>
        <dbReference type="ChEBI" id="CHEBI:29985"/>
    </ligand>
</feature>
<feature type="site" description="Functional determinant of NMDA receptors" evidence="1">
    <location>
        <position position="615"/>
    </location>
</feature>
<feature type="modified residue" description="Phosphoserine" evidence="5">
    <location>
        <position position="882"/>
    </location>
</feature>
<feature type="modified residue" description="Phosphoserine" evidence="4">
    <location>
        <position position="886"/>
    </location>
</feature>
<feature type="modified residue" description="Phosphoserine" evidence="5">
    <location>
        <position position="917"/>
    </location>
</feature>
<feature type="modified residue" description="Phosphoserine" evidence="5">
    <location>
        <position position="920"/>
    </location>
</feature>
<feature type="modified residue" description="Phosphotyrosine" evidence="5">
    <location>
        <position position="962"/>
    </location>
</feature>
<feature type="modified residue" description="Phosphotyrosine" evidence="5">
    <location>
        <position position="1039"/>
    </location>
</feature>
<feature type="modified residue" description="Phosphoserine" evidence="5">
    <location>
        <position position="1058"/>
    </location>
</feature>
<feature type="modified residue" description="Phosphoserine" evidence="5">
    <location>
        <position position="1061"/>
    </location>
</feature>
<feature type="modified residue" description="Phosphoserine" evidence="5">
    <location>
        <position position="1064"/>
    </location>
</feature>
<feature type="modified residue" description="Phosphotyrosine" evidence="5">
    <location>
        <position position="1109"/>
    </location>
</feature>
<feature type="modified residue" description="Phosphotyrosine" evidence="5">
    <location>
        <position position="1133"/>
    </location>
</feature>
<feature type="modified residue" description="Phosphoserine" evidence="5">
    <location>
        <position position="1143"/>
    </location>
</feature>
<feature type="modified residue" description="Phosphotyrosine" evidence="5">
    <location>
        <position position="1155"/>
    </location>
</feature>
<feature type="modified residue" description="Phosphoserine" evidence="5">
    <location>
        <position position="1255"/>
    </location>
</feature>
<feature type="modified residue" description="Phosphoserine" evidence="5">
    <location>
        <position position="1259"/>
    </location>
</feature>
<feature type="modified residue" description="Phosphoserine; by DAPK1" evidence="5">
    <location>
        <position position="1303"/>
    </location>
</feature>
<feature type="modified residue" description="Phosphotyrosine" evidence="5">
    <location>
        <position position="1474"/>
    </location>
</feature>
<feature type="glycosylation site" description="N-linked (GlcNAc...) asparagine" evidence="17 36 37 38">
    <location>
        <position position="74"/>
    </location>
</feature>
<feature type="glycosylation site" description="N-linked (GlcNAc...) asparagine" evidence="17 25 36 37 38 39">
    <location>
        <position position="341"/>
    </location>
</feature>
<feature type="glycosylation site" description="N-linked (GlcNAc...) asparagine" evidence="6">
    <location>
        <position position="348"/>
    </location>
</feature>
<feature type="glycosylation site" description="N-linked (GlcNAc...) asparagine" evidence="6">
    <location>
        <position position="444"/>
    </location>
</feature>
<feature type="glycosylation site" description="N-linked (GlcNAc...) asparagine" evidence="6">
    <location>
        <position position="491"/>
    </location>
</feature>
<feature type="glycosylation site" description="N-linked (GlcNAc...) asparagine" evidence="25 39">
    <location>
        <position position="542"/>
    </location>
</feature>
<feature type="glycosylation site" description="N-linked (GlcNAc...) asparagine" evidence="25 39">
    <location>
        <position position="688"/>
    </location>
</feature>
<feature type="disulfide bond" evidence="17 36 37 38">
    <location>
        <begin position="86"/>
        <end position="321"/>
    </location>
</feature>
<feature type="disulfide bond" evidence="25 39">
    <location>
        <begin position="429"/>
        <end position="456"/>
    </location>
</feature>
<feature type="disulfide bond" evidence="25 39">
    <location>
        <begin position="436"/>
        <end position="457"/>
    </location>
</feature>
<feature type="sequence variant" id="VAR_078235" description="In DEE27; uncertain significance; dbSNP:rs1057519553." evidence="21">
    <original>V</original>
    <variation>M</variation>
    <location>
        <position position="15"/>
    </location>
</feature>
<feature type="sequence variant" id="VAR_079943" description="In dbSNP:rs201094029." evidence="10">
    <original>V</original>
    <variation>I</variation>
    <location>
        <position position="18"/>
    </location>
</feature>
<feature type="sequence variant" id="VAR_079944" description="Found in a patient with schizophrenia; uncertain significance." evidence="10">
    <original>I</original>
    <variation>N</variation>
    <location>
        <position position="50"/>
    </location>
</feature>
<feature type="sequence variant" id="VAR_079945" description="In dbSNP:rs138098032." evidence="10">
    <original>A</original>
    <variation>V</variation>
    <location>
        <position position="271"/>
    </location>
</feature>
<feature type="sequence variant" id="VAR_079946" description="Found in a patient with schizophrenia; uncertain significance." evidence="10">
    <original>L</original>
    <variation>M</variation>
    <location>
        <position position="362"/>
    </location>
</feature>
<feature type="sequence variant" id="VAR_011317" evidence="27">
    <original>S</original>
    <variation>N</variation>
    <location>
        <position position="407"/>
    </location>
</feature>
<feature type="sequence variant" id="VAR_079947" description="In MRD6; decreased protein abundance; decreased localization to the cell membrane; changed glutamate-gated calcium ion channel activity characterized by decreased glutamate potency; dbSNP:rs527236034." evidence="14 20">
    <original>E</original>
    <variation>G</variation>
    <location>
        <position position="413"/>
    </location>
</feature>
<feature type="sequence variant" id="VAR_079948" description="In MRD6; decreased protein abundance; decreased localization to the cell membrane; dbSNP:rs1565478152." evidence="20">
    <original>C</original>
    <variation>R</variation>
    <location>
        <position position="436"/>
    </location>
</feature>
<feature type="sequence variant" id="VAR_076764" description="In MRD6; decreased protein abundance; decreased localization to the cell membrane; changed glutamate-gated calcium ion channel activity characterized by increased glutamate and glycine potency and increased open probability; dbSNP:rs397514555." evidence="12 20">
    <original>C</original>
    <variation>Y</variation>
    <location>
        <position position="456"/>
    </location>
</feature>
<feature type="sequence variant" id="VAR_079949" description="In MRD6; decreased protein abundance; decreased localization to the cell membrane; decreased glutamate-gated calcium ion channel activity characterized by decreased glutamate potency and increased glycine potency; dbSNP:rs1949427787." evidence="20">
    <original>C</original>
    <variation>F</variation>
    <location>
        <position position="461"/>
    </location>
</feature>
<feature type="sequence variant" id="VAR_072663" description="In DEE27; decreased protein abundance; decreased localization to the cell membrane; increased glutamate-gated calcium ion channel activity via an allosteric effect which is characterized by increased glutamate and glycine potency and increased open probability; the mutant channel is less sensitive to magnesium inhibition and has increased calcium permeability compared to wild-type; dbSNP:rs672601378." evidence="13 20">
    <original>R</original>
    <variation>H</variation>
    <location>
        <position position="540"/>
    </location>
</feature>
<feature type="sequence variant" id="VAR_069384" description="In MRD6; no effect on localization to the cell membrane; loss of glutamate-gated calcium ion channel activity; dbSNP:rs397514556." evidence="11 22">
    <original>P</original>
    <variation>L</variation>
    <location>
        <position position="553"/>
    </location>
</feature>
<feature type="sequence variant" id="VAR_072664" description="In DEE27; severe phenotype with early onset seizures; gain of function mutation; results in neuronal hyperexcitability; the mutant channel is not inhibited by magnesium and has increased calcium permeability compared to wild-type; dbSNP:rs672601377." evidence="13">
    <original>N</original>
    <variation>I</variation>
    <location>
        <position position="615"/>
    </location>
</feature>
<feature type="sequence variant" id="VAR_072665" description="In DEE27; severe phenotype with early onset seizures; gain of function mutation; results in neuronal hyperexcitability; the mutant channel is not inhibited by magnesium and has increased calcium permeability compared to wild-type; dbSNP:rs672601376." evidence="13">
    <original>V</original>
    <variation>G</variation>
    <location>
        <position position="618"/>
    </location>
</feature>
<feature type="sequence variant" id="VAR_089647" description="In DEE27; likely pathogenic; decreased localization to the cell membrane; changed glutamate-gated calcium ion channel activity; results in increased agonist potency and mutant channels activated at lower glutamate and glycine concentrations." evidence="26">
    <original>Y</original>
    <variation>C</variation>
    <location>
        <position position="646"/>
    </location>
</feature>
<feature type="sequence variant" id="VAR_089648" description="In DEE27; uncertain significance; changed glutamate-gated calcium ion channel activity; results in increased agonist potency and mutant channels activated at lower glutamate and glycine concentrations." evidence="26">
    <original>N</original>
    <variation>S</variation>
    <location>
        <position position="649"/>
    </location>
</feature>
<feature type="sequence variant" id="VAR_089649" description="In MRD6; uncertain significance; changed glutamate-gated calcium ion channel activity; results in decreased agonist potency and mutant channels activated at higher glutamate and glycine concentrations." evidence="26">
    <original>A</original>
    <variation>P</variation>
    <location>
        <position position="652"/>
    </location>
</feature>
<feature type="sequence variant" id="VAR_089650" description="In MRD6; uncertain significance." evidence="26">
    <original>F</original>
    <variation>V</variation>
    <location>
        <position position="653"/>
    </location>
</feature>
<feature type="sequence variant" id="VAR_065900" description="In MRD6; decreased protein abundance; no effect on localization to the cell membrane; no significant effect on calcium ion transmembrane import into cytosol; analysis of agonist dose-response curves for glutamate and glycine are not consistent; dbSNP:rs387906636." evidence="9 20">
    <original>R</original>
    <variation>C</variation>
    <location>
        <position position="682"/>
    </location>
</feature>
<feature type="sequence variant" id="VAR_079950" description="In MRD6; decreased protein abundance; decreased localization to the cell membrane; changed glutamate-gated calcium ion channel activity characterized by increased glutamate and glycine potency; dbSNP:rs1555103971." evidence="20">
    <original>R</original>
    <variation>H</variation>
    <location>
        <position position="696"/>
    </location>
</feature>
<feature type="sequence variant" id="VAR_078647" description="In MRD6; dbSNP:rs797044849." evidence="15">
    <original>G</original>
    <variation>E</variation>
    <location>
        <position position="820"/>
    </location>
</feature>
<feature type="sequence variant" id="VAR_079951" description="Found in a patient with autism spectrum disorder; uncertain significance; dbSNP:rs1948651813." evidence="10">
    <original>L</original>
    <variation>V</variation>
    <location>
        <position position="825"/>
    </location>
</feature>
<feature type="sequence variant" id="VAR_079952" description="Found in a patient with schizophrenia; uncertain significance." evidence="10">
    <original>Q</original>
    <variation>R</variation>
    <location>
        <position position="1014"/>
    </location>
</feature>
<feature type="sequence variant" id="VAR_079953" description="In dbSNP:rs201963596." evidence="10">
    <original>G</original>
    <variation>S</variation>
    <location>
        <position position="1026"/>
    </location>
</feature>
<feature type="sequence variant" id="VAR_079954" evidence="10">
    <original>M</original>
    <variation>R</variation>
    <location>
        <position position="1342"/>
    </location>
</feature>
<feature type="sequence variant" id="VAR_079955" description="Found in a patient with autism spectrum disorder; uncertain significance; dbSNP:rs201463390." evidence="10">
    <original>S</original>
    <variation>L</variation>
    <location>
        <position position="1415"/>
    </location>
</feature>
<feature type="sequence variant" id="VAR_079956" description="In dbSNP:rs748128078." evidence="10">
    <original>L</original>
    <variation>F</variation>
    <location>
        <position position="1424"/>
    </location>
</feature>
<feature type="sequence variant" id="VAR_078236" description="Found in a patient with Landau-Kleffner syndrome; uncertain significance; dbSNP:rs758042475." evidence="21">
    <original>P</original>
    <variation>A</variation>
    <location>
        <position position="1439"/>
    </location>
</feature>
<feature type="sequence variant" id="VAR_079957" description="Found in a patient with schizophrenia; uncertain significance; dbSNP:rs756790727." evidence="10">
    <original>S</original>
    <variation>F</variation>
    <location>
        <position position="1452"/>
    </location>
</feature>
<feature type="mutagenesis site" description="Changed glutamate-gated calcium ion channel activity characterized by increased glutamate and glycine potency and slowed response rise time and deactivation time course." evidence="22">
    <original>P</original>
    <variation>R</variation>
    <location>
        <position position="553"/>
    </location>
</feature>
<feature type="mutagenesis site" description="Severely reduced localization to cell membrane." evidence="26">
    <original>A</original>
    <variation>P</variation>
    <location>
        <position position="636"/>
    </location>
</feature>
<feature type="mutagenesis site" description="Reduced localization to cell membrane. Affects glutamate-gated calcium ion channel activity resulting in increased agonist potency and mutant channels activated at lower glutamate and glycine concentrations." evidence="26">
    <original>A</original>
    <variation>V</variation>
    <location>
        <position position="636"/>
    </location>
</feature>
<feature type="mutagenesis site" description="Reduced localization to cell membrane. Affects glutamate-gated calcium ion channel activity resulting in increased agonist potency and mutant channels activated at lower glutamate and glycine concentrations." evidence="26">
    <original>A</original>
    <variation>V</variation>
    <location>
        <position position="639"/>
    </location>
</feature>
<feature type="mutagenesis site" description="Reduced localization to cell membrane. Affects glutamate-gated calcium ion channel activity resulting in increased agonist potency and mutant channels activated at lower glutamate and glycine concentrations." evidence="26">
    <original>I</original>
    <variation>T</variation>
    <location>
        <position position="641"/>
    </location>
</feature>
<feature type="mutagenesis site" description="Affects glutamate-gated calcium ion channel activity resulting in increased agonist potency and mutant channels activated at lower glutamate and glycine concentrations." evidence="26">
    <original>N</original>
    <variation>T</variation>
    <location>
        <position position="649"/>
    </location>
</feature>
<feature type="mutagenesis site" description="No significant effect on glutamate and glycine agonist potency." evidence="26">
    <original>A</original>
    <variation>G</variation>
    <location>
        <position position="652"/>
    </location>
</feature>
<feature type="mutagenesis site" description="Reduced localization to cell membrane." evidence="26">
    <original>I</original>
    <variation>F</variation>
    <location>
        <position position="655"/>
    </location>
</feature>
<feature type="mutagenesis site" description="Increased glutamate and glycine agonist potency." evidence="23">
    <original>M</original>
    <variation>V</variation>
    <location>
        <position position="818"/>
    </location>
</feature>
<feature type="sequence conflict" description="In Ref. 3; AAD00659." evidence="34" ref="3">
    <original>V</original>
    <variation>A</variation>
    <location>
        <position position="434"/>
    </location>
</feature>
<feature type="sequence conflict" description="In Ref. 5; AAA69920." evidence="34" ref="5">
    <original>G</original>
    <variation>A</variation>
    <location>
        <position position="745"/>
    </location>
</feature>
<feature type="sequence conflict" description="In Ref. 5; AAA69920/AAA74930." evidence="34" ref="5">
    <original>K</original>
    <variation>N</variation>
    <location>
        <position position="773"/>
    </location>
</feature>
<feature type="sequence conflict" description="In Ref. 5; AAA69920/AAA74930." evidence="34" ref="5">
    <original>W</original>
    <variation>C</variation>
    <location>
        <position position="796"/>
    </location>
</feature>
<feature type="sequence conflict" description="In Ref. 5; AAA69920/AAA74930." evidence="34" ref="5">
    <original>T</original>
    <variation>P</variation>
    <location>
        <position position="888"/>
    </location>
</feature>
<feature type="sequence conflict" description="In Ref. 5; AAA69920/AAA74930." evidence="34" ref="5">
    <original>L</original>
    <variation>V</variation>
    <location>
        <position position="902"/>
    </location>
</feature>
<feature type="sequence conflict" description="In Ref. 1; AAB60368." evidence="34" ref="1">
    <original>SA</original>
    <variation>RP</variation>
    <location>
        <begin position="920"/>
        <end position="921"/>
    </location>
</feature>
<feature type="sequence conflict" description="In Ref. 5; AAA69920/AAA74930." evidence="34" ref="5">
    <original>L</original>
    <variation>S</variation>
    <location>
        <position position="958"/>
    </location>
</feature>
<feature type="sequence conflict" description="In Ref. 5; AAA69920." evidence="34" ref="5">
    <original>VYQ</original>
    <variation>DHY</variation>
    <location>
        <begin position="980"/>
        <end position="982"/>
    </location>
</feature>
<feature type="sequence conflict" description="In Ref. 5; AAA69920." evidence="34" ref="5">
    <original>I</original>
    <variation>M</variation>
    <location>
        <position position="1056"/>
    </location>
</feature>
<feature type="sequence conflict" description="In Ref. 2; AAB49993." evidence="34" ref="2">
    <original>V</original>
    <variation>I</variation>
    <location>
        <position position="1167"/>
    </location>
</feature>
<feature type="strand" evidence="42">
    <location>
        <begin position="34"/>
        <end position="44"/>
    </location>
</feature>
<feature type="helix" evidence="42">
    <location>
        <begin position="47"/>
        <end position="50"/>
    </location>
</feature>
<feature type="strand" evidence="42">
    <location>
        <begin position="62"/>
        <end position="73"/>
    </location>
</feature>
<feature type="helix" evidence="42">
    <location>
        <begin position="78"/>
        <end position="91"/>
    </location>
</feature>
<feature type="strand" evidence="42">
    <location>
        <begin position="94"/>
        <end position="100"/>
    </location>
</feature>
<feature type="helix" evidence="42">
    <location>
        <begin position="107"/>
        <end position="119"/>
    </location>
</feature>
<feature type="strand" evidence="42">
    <location>
        <begin position="123"/>
        <end position="127"/>
    </location>
</feature>
<feature type="helix" evidence="42">
    <location>
        <begin position="128"/>
        <end position="131"/>
    </location>
</feature>
<feature type="strand" evidence="42">
    <location>
        <begin position="143"/>
        <end position="147"/>
    </location>
</feature>
<feature type="helix" evidence="42">
    <location>
        <begin position="150"/>
        <end position="164"/>
    </location>
</feature>
<feature type="strand" evidence="42">
    <location>
        <begin position="168"/>
        <end position="173"/>
    </location>
</feature>
<feature type="helix" evidence="42">
    <location>
        <begin position="179"/>
        <end position="191"/>
    </location>
</feature>
<feature type="strand" evidence="41">
    <location>
        <begin position="193"/>
        <end position="195"/>
    </location>
</feature>
<feature type="strand" evidence="42">
    <location>
        <begin position="198"/>
        <end position="204"/>
    </location>
</feature>
<feature type="helix" evidence="42">
    <location>
        <begin position="215"/>
        <end position="221"/>
    </location>
</feature>
<feature type="strand" evidence="42">
    <location>
        <begin position="226"/>
        <end position="232"/>
    </location>
</feature>
<feature type="helix" evidence="42">
    <location>
        <begin position="234"/>
        <end position="246"/>
    </location>
</feature>
<feature type="strand" evidence="42">
    <location>
        <begin position="255"/>
        <end position="258"/>
    </location>
</feature>
<feature type="helix" evidence="42">
    <location>
        <begin position="260"/>
        <end position="263"/>
    </location>
</feature>
<feature type="strand" evidence="42">
    <location>
        <begin position="278"/>
        <end position="282"/>
    </location>
</feature>
<feature type="turn" evidence="42">
    <location>
        <begin position="284"/>
        <end position="286"/>
    </location>
</feature>
<feature type="helix" evidence="42">
    <location>
        <begin position="289"/>
        <end position="311"/>
    </location>
</feature>
<feature type="strand" evidence="40">
    <location>
        <begin position="321"/>
        <end position="323"/>
    </location>
</feature>
<feature type="helix" evidence="42">
    <location>
        <begin position="324"/>
        <end position="327"/>
    </location>
</feature>
<feature type="helix" evidence="42">
    <location>
        <begin position="328"/>
        <end position="330"/>
    </location>
</feature>
<feature type="helix" evidence="42">
    <location>
        <begin position="336"/>
        <end position="339"/>
    </location>
</feature>
<feature type="strand" evidence="42">
    <location>
        <begin position="355"/>
        <end position="359"/>
    </location>
</feature>
<feature type="strand" evidence="42">
    <location>
        <begin position="362"/>
        <end position="367"/>
    </location>
</feature>
<feature type="strand" evidence="42">
    <location>
        <begin position="373"/>
        <end position="379"/>
    </location>
</feature>
<feature type="strand" evidence="42">
    <location>
        <begin position="384"/>
        <end position="387"/>
    </location>
</feature>
<feature type="strand" evidence="43">
    <location>
        <begin position="1304"/>
        <end position="1306"/>
    </location>
</feature>
<name>NMDE2_HUMAN</name>
<sequence>MKPRAECCSPKFWLVLAVLAVSGSRARSQKSPPSIGIAVILVGTSDEVAIKDAHEKDDFHHLSVVPRVELVAMNETDPKSIITRICDLMSDRKIQGVVFADDTDQEAIAQILDFISAQTLTPILGIHGGSSMIMADKDESSMFFQFGPSIEQQASVMLNIMEEYDWYIFSIVTTYFPGYQDFVNKIRSTIENSFVGWELEEVLLLDMSLDDGDSKIQNQLKKLQSPIILLYCTKEEATYIFEVANSVGLTGYGYTWIVPSLVAGDTDTVPAEFPTGLISVSYDEWDYGLPARVRDGIAIITTAASDMLSEHSFIPEPKSSCYNTHEKRIYQSNMLNRYLINVTFEGRNLSFSEDGYQMHPKLVIILLNKERKWERVGKWKDKSLQMKYYVWPRMCPETEEQEDDHLSIVTLEEAPFVIVESVDPLSGTCMRNTVPCQKRIVTENKTDEEPGYIKKCCKGFCIDILKKISKSVKFTYDLYLVTNGKHGKKINGTWNGMIGEVVMKRAYMAVGSLTINEERSEVVDFSVPFIETGISVMVSRSNGTVSPSAFLEPFSADVWVMMFVMLLIVSAVAVFVFEYFSPVGYNRCLADGREPGGPSFTIGKAIWLLWGLVFNNSVPVQNPKGTTSKIMVSVWAFFAVIFLASYTANLAAFMIQEEYVDQVSGLSDKKFQRPNDFSPPFRFGTVPNGSTERNIRNNYAEMHAYMGKFNQRGVDDALLSLKTGKLDAFIYDAAVLNYMAGRDEGCKLVTIGSGKVFASTGYGIAIQKDSGWKRQVDLAILQLFGDGEMEELEALWLTGICHNEKNEVMSSQLDIDNMAGVFYMLGAAMALSLITFICEHLFYWQFRHCFMGVCSGKPGMVFSISRGIYSCIHGVAIEERQSVMNSPTATMNNTHSNILRLLRTAKNMANLSGVNGSPQSALDFIRRESSVYDISEHRRSFTHSDCKSYNNPPCEENLFSDYISEVERTFGNLQLKDSNVYQDHYHHHHRPHSIGSASSIDGLYDCDNPPFTTQSRSISKKPLDIGLPSSKHSQLSDLYGKFSFKSDRYSGHDDLIRSDVSDISTHTVTYGNIEGNAAKRRKQQYKDSLKKRPASAKSRREFDEIELAYRRRPPRSPDHKRYFRDKEGLRDFYLDQFRTKENSPHWEHVDLTDIYKERSDDFKRDSVSGGGPCTNRSHIKHGTGDKHGVVSGVPAPWEKNLTNVEWEDRSGGNFCRSCPSKLHNYSTTVTGQNSGRQACIRCEACKKAGNLYDISEDNSLQELDQPAAPVAVTSNASTTKYPQSPTNSKAQKKNRNKLRRQHSYDTFVDLQKEEAALAPRSVSLKDKGRFMDGSPYAHMFEMSAGESTFANNKSSVPTAGHHHHNNPGGGYMLSKSLYPDRVTQNPFIPTFGDDQCLLHGSKSYFFRQPTVAGASKARPDFRALVTNKPVVSALHGAVPARFQKDICIGNQSNPCVPNNKNPRAFNGSSNGHVYEKLSSIESDV</sequence>
<evidence type="ECO:0000250" key="1"/>
<evidence type="ECO:0000250" key="2">
    <source>
        <dbReference type="UniProtKB" id="A7XY94"/>
    </source>
</evidence>
<evidence type="ECO:0000250" key="3">
    <source>
        <dbReference type="UniProtKB" id="P35438"/>
    </source>
</evidence>
<evidence type="ECO:0000250" key="4">
    <source>
        <dbReference type="UniProtKB" id="Q00960"/>
    </source>
</evidence>
<evidence type="ECO:0000250" key="5">
    <source>
        <dbReference type="UniProtKB" id="Q01097"/>
    </source>
</evidence>
<evidence type="ECO:0000255" key="6"/>
<evidence type="ECO:0000256" key="7">
    <source>
        <dbReference type="SAM" id="MobiDB-lite"/>
    </source>
</evidence>
<evidence type="ECO:0000269" key="8">
    <source>
    </source>
</evidence>
<evidence type="ECO:0000269" key="9">
    <source>
    </source>
</evidence>
<evidence type="ECO:0000269" key="10">
    <source>
    </source>
</evidence>
<evidence type="ECO:0000269" key="11">
    <source>
    </source>
</evidence>
<evidence type="ECO:0000269" key="12">
    <source>
    </source>
</evidence>
<evidence type="ECO:0000269" key="13">
    <source>
    </source>
</evidence>
<evidence type="ECO:0000269" key="14">
    <source>
    </source>
</evidence>
<evidence type="ECO:0000269" key="15">
    <source>
    </source>
</evidence>
<evidence type="ECO:0000269" key="16">
    <source>
    </source>
</evidence>
<evidence type="ECO:0000269" key="17">
    <source>
    </source>
</evidence>
<evidence type="ECO:0000269" key="18">
    <source>
    </source>
</evidence>
<evidence type="ECO:0000269" key="19">
    <source>
    </source>
</evidence>
<evidence type="ECO:0000269" key="20">
    <source>
    </source>
</evidence>
<evidence type="ECO:0000269" key="21">
    <source>
    </source>
</evidence>
<evidence type="ECO:0000269" key="22">
    <source>
    </source>
</evidence>
<evidence type="ECO:0000269" key="23">
    <source>
    </source>
</evidence>
<evidence type="ECO:0000269" key="24">
    <source>
    </source>
</evidence>
<evidence type="ECO:0000269" key="25">
    <source>
    </source>
</evidence>
<evidence type="ECO:0000269" key="26">
    <source>
    </source>
</evidence>
<evidence type="ECO:0000269" key="27">
    <source>
    </source>
</evidence>
<evidence type="ECO:0000269" key="28">
    <source>
    </source>
</evidence>
<evidence type="ECO:0000269" key="29">
    <source>
    </source>
</evidence>
<evidence type="ECO:0000303" key="30">
    <source>
    </source>
</evidence>
<evidence type="ECO:0000303" key="31">
    <source>
    </source>
</evidence>
<evidence type="ECO:0000303" key="32">
    <source>
    </source>
</evidence>
<evidence type="ECO:0000303" key="33">
    <source ref="3"/>
</evidence>
<evidence type="ECO:0000305" key="34"/>
<evidence type="ECO:0000312" key="35">
    <source>
        <dbReference type="HGNC" id="HGNC:4586"/>
    </source>
</evidence>
<evidence type="ECO:0007744" key="36">
    <source>
        <dbReference type="PDB" id="5EWJ"/>
    </source>
</evidence>
<evidence type="ECO:0007744" key="37">
    <source>
        <dbReference type="PDB" id="5EWL"/>
    </source>
</evidence>
<evidence type="ECO:0007744" key="38">
    <source>
        <dbReference type="PDB" id="5EWM"/>
    </source>
</evidence>
<evidence type="ECO:0007744" key="39">
    <source>
        <dbReference type="PDB" id="7EU8"/>
    </source>
</evidence>
<evidence type="ECO:0007829" key="40">
    <source>
        <dbReference type="PDB" id="5EWJ"/>
    </source>
</evidence>
<evidence type="ECO:0007829" key="41">
    <source>
        <dbReference type="PDB" id="5EWL"/>
    </source>
</evidence>
<evidence type="ECO:0007829" key="42">
    <source>
        <dbReference type="PDB" id="5EWM"/>
    </source>
</evidence>
<evidence type="ECO:0007829" key="43">
    <source>
        <dbReference type="PDB" id="7UJR"/>
    </source>
</evidence>
<dbReference type="EMBL" id="U90278">
    <property type="protein sequence ID" value="AAB49993.1"/>
    <property type="molecule type" value="mRNA"/>
</dbReference>
<dbReference type="EMBL" id="U88963">
    <property type="protein sequence ID" value="AAD00659.1"/>
    <property type="molecule type" value="mRNA"/>
</dbReference>
<dbReference type="EMBL" id="U11287">
    <property type="protein sequence ID" value="AAB60368.1"/>
    <property type="molecule type" value="mRNA"/>
</dbReference>
<dbReference type="EMBL" id="BC113618">
    <property type="protein sequence ID" value="AAI13619.1"/>
    <property type="molecule type" value="mRNA"/>
</dbReference>
<dbReference type="EMBL" id="BC113620">
    <property type="protein sequence ID" value="AAI13621.1"/>
    <property type="molecule type" value="mRNA"/>
</dbReference>
<dbReference type="EMBL" id="U28758">
    <property type="protein sequence ID" value="AAA74930.1"/>
    <property type="molecule type" value="mRNA"/>
</dbReference>
<dbReference type="EMBL" id="U28861">
    <property type="protein sequence ID" value="AAA69919.1"/>
    <property type="molecule type" value="mRNA"/>
</dbReference>
<dbReference type="EMBL" id="U28862">
    <property type="protein sequence ID" value="AAA69920.1"/>
    <property type="molecule type" value="mRNA"/>
</dbReference>
<dbReference type="CCDS" id="CCDS8662.1"/>
<dbReference type="PIR" id="I39066">
    <property type="entry name" value="I39066"/>
</dbReference>
<dbReference type="PIR" id="S52086">
    <property type="entry name" value="S52086"/>
</dbReference>
<dbReference type="RefSeq" id="NP_000825.2">
    <property type="nucleotide sequence ID" value="NM_000834.5"/>
</dbReference>
<dbReference type="RefSeq" id="NP_001400921.1">
    <property type="nucleotide sequence ID" value="NM_001413992.1"/>
</dbReference>
<dbReference type="RefSeq" id="XP_011518930.1">
    <property type="nucleotide sequence ID" value="XM_011520628.2"/>
</dbReference>
<dbReference type="RefSeq" id="XP_011518931.1">
    <property type="nucleotide sequence ID" value="XM_011520629.2"/>
</dbReference>
<dbReference type="RefSeq" id="XP_016874708.1">
    <property type="nucleotide sequence ID" value="XM_017019219.1"/>
</dbReference>
<dbReference type="RefSeq" id="XP_054227829.1">
    <property type="nucleotide sequence ID" value="XM_054371854.1"/>
</dbReference>
<dbReference type="RefSeq" id="XP_054227830.1">
    <property type="nucleotide sequence ID" value="XM_054371855.1"/>
</dbReference>
<dbReference type="PDB" id="5EWJ">
    <property type="method" value="X-ray"/>
    <property type="resolution" value="2.77 A"/>
    <property type="chains" value="B/D=31-394"/>
</dbReference>
<dbReference type="PDB" id="5EWL">
    <property type="method" value="X-ray"/>
    <property type="resolution" value="2.98 A"/>
    <property type="chains" value="B/D=31-394"/>
</dbReference>
<dbReference type="PDB" id="5EWM">
    <property type="method" value="X-ray"/>
    <property type="resolution" value="2.76 A"/>
    <property type="chains" value="B/D=31-394"/>
</dbReference>
<dbReference type="PDB" id="7EU8">
    <property type="method" value="EM"/>
    <property type="resolution" value="4.07 A"/>
    <property type="chains" value="B/D=1-842"/>
</dbReference>
<dbReference type="PDB" id="7KL0">
    <property type="method" value="X-ray"/>
    <property type="resolution" value="2.40 A"/>
    <property type="chains" value="C/D=1289-1310"/>
</dbReference>
<dbReference type="PDB" id="7KL1">
    <property type="method" value="X-ray"/>
    <property type="resolution" value="2.40 A"/>
    <property type="chains" value="C/D=1289-1310"/>
</dbReference>
<dbReference type="PDB" id="7KL2">
    <property type="method" value="X-ray"/>
    <property type="resolution" value="2.56 A"/>
    <property type="chains" value="B=1289-1310"/>
</dbReference>
<dbReference type="PDB" id="7UIS">
    <property type="method" value="X-ray"/>
    <property type="resolution" value="2.58 A"/>
    <property type="chains" value="B=1289-1310"/>
</dbReference>
<dbReference type="PDB" id="7UJP">
    <property type="method" value="X-ray"/>
    <property type="resolution" value="2.56 A"/>
    <property type="chains" value="C/D=1289-1310"/>
</dbReference>
<dbReference type="PDB" id="7UJQ">
    <property type="method" value="X-ray"/>
    <property type="resolution" value="2.25 A"/>
    <property type="chains" value="C/D=1289-1310"/>
</dbReference>
<dbReference type="PDB" id="7UJR">
    <property type="method" value="X-ray"/>
    <property type="resolution" value="1.95 A"/>
    <property type="chains" value="B=1289-1310"/>
</dbReference>
<dbReference type="PDB" id="7UJS">
    <property type="method" value="X-ray"/>
    <property type="resolution" value="2.75 A"/>
    <property type="chains" value="B=1289-1310"/>
</dbReference>
<dbReference type="PDB" id="7UJT">
    <property type="method" value="X-ray"/>
    <property type="resolution" value="2.10 A"/>
    <property type="chains" value="B=1289-1310"/>
</dbReference>
<dbReference type="PDB" id="8VUU">
    <property type="method" value="EM"/>
    <property type="resolution" value="4.05 A"/>
    <property type="chains" value="B/D=31-845"/>
</dbReference>
<dbReference type="PDB" id="8VUV">
    <property type="method" value="EM"/>
    <property type="resolution" value="3.69 A"/>
    <property type="chains" value="B=31-387"/>
</dbReference>
<dbReference type="PDB" id="9D37">
    <property type="method" value="EM"/>
    <property type="resolution" value="3.34 A"/>
    <property type="chains" value="B=27-852"/>
</dbReference>
<dbReference type="PDB" id="9D38">
    <property type="method" value="EM"/>
    <property type="resolution" value="3.95 A"/>
    <property type="chains" value="B=27-852"/>
</dbReference>
<dbReference type="PDB" id="9D39">
    <property type="method" value="EM"/>
    <property type="resolution" value="3.65 A"/>
    <property type="chains" value="B=27-852"/>
</dbReference>
<dbReference type="PDB" id="9D3A">
    <property type="method" value="EM"/>
    <property type="resolution" value="3.78 A"/>
    <property type="chains" value="B=27-852"/>
</dbReference>
<dbReference type="PDB" id="9D3B">
    <property type="method" value="EM"/>
    <property type="resolution" value="3.71 A"/>
    <property type="chains" value="B=27-852"/>
</dbReference>
<dbReference type="PDB" id="9D3C">
    <property type="method" value="EM"/>
    <property type="resolution" value="3.96 A"/>
    <property type="chains" value="B=27-852"/>
</dbReference>
<dbReference type="PDBsum" id="5EWJ"/>
<dbReference type="PDBsum" id="5EWL"/>
<dbReference type="PDBsum" id="5EWM"/>
<dbReference type="PDBsum" id="7EU8"/>
<dbReference type="PDBsum" id="7KL0"/>
<dbReference type="PDBsum" id="7KL1"/>
<dbReference type="PDBsum" id="7KL2"/>
<dbReference type="PDBsum" id="7UIS"/>
<dbReference type="PDBsum" id="7UJP"/>
<dbReference type="PDBsum" id="7UJQ"/>
<dbReference type="PDBsum" id="7UJR"/>
<dbReference type="PDBsum" id="7UJS"/>
<dbReference type="PDBsum" id="7UJT"/>
<dbReference type="PDBsum" id="8VUU"/>
<dbReference type="PDBsum" id="8VUV"/>
<dbReference type="PDBsum" id="9D37"/>
<dbReference type="PDBsum" id="9D38"/>
<dbReference type="PDBsum" id="9D39"/>
<dbReference type="PDBsum" id="9D3A"/>
<dbReference type="PDBsum" id="9D3B"/>
<dbReference type="PDBsum" id="9D3C"/>
<dbReference type="EMDB" id="EMD-31309"/>
<dbReference type="EMDB" id="EMD-43540"/>
<dbReference type="EMDB" id="EMD-43541"/>
<dbReference type="EMDB" id="EMD-46526"/>
<dbReference type="EMDB" id="EMD-46527"/>
<dbReference type="EMDB" id="EMD-46528"/>
<dbReference type="EMDB" id="EMD-46529"/>
<dbReference type="EMDB" id="EMD-46530"/>
<dbReference type="EMDB" id="EMD-46531"/>
<dbReference type="EMDB" id="EMD-61000"/>
<dbReference type="EMDB" id="EMD-61001"/>
<dbReference type="SMR" id="Q13224"/>
<dbReference type="BioGRID" id="109161">
    <property type="interactions" value="60"/>
</dbReference>
<dbReference type="ComplexPortal" id="CPX-285">
    <property type="entry name" value="NMDA receptor complex, GluN1-GluN2B"/>
</dbReference>
<dbReference type="ComplexPortal" id="CPX-294">
    <property type="entry name" value="NMDA receptor complex, GluN1-GluN2A-GluN2B"/>
</dbReference>
<dbReference type="CORUM" id="Q13224"/>
<dbReference type="DIP" id="DIP-41002N"/>
<dbReference type="FunCoup" id="Q13224">
    <property type="interactions" value="1163"/>
</dbReference>
<dbReference type="IntAct" id="Q13224">
    <property type="interactions" value="19"/>
</dbReference>
<dbReference type="MINT" id="Q13224"/>
<dbReference type="STRING" id="9606.ENSP00000477455"/>
<dbReference type="BindingDB" id="Q13224"/>
<dbReference type="ChEMBL" id="CHEMBL1904"/>
<dbReference type="DrugBank" id="DB00659">
    <property type="generic name" value="Acamprosate"/>
</dbReference>
<dbReference type="DrugBank" id="DB06151">
    <property type="generic name" value="Acetylcysteine"/>
</dbReference>
<dbReference type="DrugBank" id="DB01238">
    <property type="generic name" value="Aripiprazole"/>
</dbReference>
<dbReference type="DrugBank" id="DB00128">
    <property type="generic name" value="Aspartic acid"/>
</dbReference>
<dbReference type="DrugBank" id="DB00289">
    <property type="generic name" value="Atomoxetine"/>
</dbReference>
<dbReference type="DrugBank" id="DB12063">
    <property type="generic name" value="CERC-301"/>
</dbReference>
<dbReference type="DrugBank" id="DB02655">
    <property type="generic name" value="D-Aspartic Acid"/>
</dbReference>
<dbReference type="DrugBank" id="DB00647">
    <property type="generic name" value="Dextropropoxyphene"/>
</dbReference>
<dbReference type="DrugBank" id="DB00843">
    <property type="generic name" value="Donepezil"/>
</dbReference>
<dbReference type="DrugBank" id="DB12869">
    <property type="generic name" value="Eliprodil"/>
</dbReference>
<dbReference type="DrugBank" id="DB00228">
    <property type="generic name" value="Enflurane"/>
</dbReference>
<dbReference type="DrugBank" id="DB11823">
    <property type="generic name" value="Esketamine"/>
</dbReference>
<dbReference type="DrugBank" id="DB05956">
    <property type="generic name" value="EVT-101"/>
</dbReference>
<dbReference type="DrugBank" id="DB00949">
    <property type="generic name" value="Felbamate"/>
</dbReference>
<dbReference type="DrugBank" id="DB03759">
    <property type="generic name" value="FG-9041"/>
</dbReference>
<dbReference type="DrugBank" id="DB13146">
    <property type="generic name" value="Fluciclovine (18F)"/>
</dbReference>
<dbReference type="DrugBank" id="DB06741">
    <property type="generic name" value="Gavestinel"/>
</dbReference>
<dbReference type="DrugBank" id="DB00142">
    <property type="generic name" value="Glutamic acid"/>
</dbReference>
<dbReference type="DrugBank" id="DB00874">
    <property type="generic name" value="Guaifenesin"/>
</dbReference>
<dbReference type="DrugBank" id="DB00502">
    <property type="generic name" value="Haloperidol"/>
</dbReference>
<dbReference type="DrugBank" id="DB08954">
    <property type="generic name" value="Ifenprodil"/>
</dbReference>
<dbReference type="DrugBank" id="DB06738">
    <property type="generic name" value="Ketobemidone"/>
</dbReference>
<dbReference type="DrugBank" id="DB11937">
    <property type="generic name" value="Kynurenic Acid"/>
</dbReference>
<dbReference type="DrugBank" id="DB09409">
    <property type="generic name" value="Magnesium acetate tetrahydrate"/>
</dbReference>
<dbReference type="DrugBank" id="DB09481">
    <property type="generic name" value="Magnesium carbonate"/>
</dbReference>
<dbReference type="DrugBank" id="DB01043">
    <property type="generic name" value="Memantine"/>
</dbReference>
<dbReference type="DrugBank" id="DB00454">
    <property type="generic name" value="Meperidine"/>
</dbReference>
<dbReference type="DrugBank" id="DB00333">
    <property type="generic name" value="Methadone"/>
</dbReference>
<dbReference type="DrugBank" id="DB04896">
    <property type="generic name" value="Milnacipran"/>
</dbReference>
<dbReference type="DrugBank" id="DB00312">
    <property type="generic name" value="Pentobarbital"/>
</dbReference>
<dbReference type="DrugBank" id="DB03575">
    <property type="generic name" value="Phencyclidine"/>
</dbReference>
<dbReference type="DrugBank" id="DB01174">
    <property type="generic name" value="Phenobarbital"/>
</dbReference>
<dbReference type="DrugBank" id="DB01708">
    <property type="generic name" value="Prasterone"/>
</dbReference>
<dbReference type="DrugBank" id="DB12260">
    <property type="generic name" value="Radiprodil"/>
</dbReference>
<dbReference type="DrugBank" id="DB00418">
    <property type="generic name" value="Secobarbital"/>
</dbReference>
<dbReference type="DrugBank" id="DB01956">
    <property type="generic name" value="Taurine"/>
</dbReference>
<dbReference type="DrugBank" id="DB01520">
    <property type="generic name" value="Tenocyclidine"/>
</dbReference>
<dbReference type="DrugBank" id="DB00193">
    <property type="generic name" value="Tramadol"/>
</dbReference>
<dbReference type="DrugBank" id="DB18795">
    <property type="generic name" value="Traxoprodil"/>
</dbReference>
<dbReference type="DrugCentral" id="Q13224"/>
<dbReference type="GuidetoPHARMACOLOGY" id="457"/>
<dbReference type="GlyCosmos" id="Q13224">
    <property type="glycosylation" value="7 sites, No reported glycans"/>
</dbReference>
<dbReference type="GlyGen" id="Q13224">
    <property type="glycosylation" value="7 sites"/>
</dbReference>
<dbReference type="iPTMnet" id="Q13224"/>
<dbReference type="PhosphoSitePlus" id="Q13224"/>
<dbReference type="SwissPalm" id="Q13224"/>
<dbReference type="BioMuta" id="GRIN2B"/>
<dbReference type="DMDM" id="14548162"/>
<dbReference type="jPOST" id="Q13224"/>
<dbReference type="MassIVE" id="Q13224"/>
<dbReference type="PaxDb" id="9606-ENSP00000477455"/>
<dbReference type="PeptideAtlas" id="Q13224"/>
<dbReference type="ProteomicsDB" id="59232"/>
<dbReference type="ABCD" id="Q13224">
    <property type="antibodies" value="1 sequenced antibody"/>
</dbReference>
<dbReference type="Antibodypedia" id="71655">
    <property type="antibodies" value="1347 antibodies from 47 providers"/>
</dbReference>
<dbReference type="DNASU" id="2904"/>
<dbReference type="Ensembl" id="ENST00000609686.4">
    <property type="protein sequence ID" value="ENSP00000477455.1"/>
    <property type="gene ID" value="ENSG00000273079.7"/>
</dbReference>
<dbReference type="Ensembl" id="ENST00000630791.3">
    <property type="protein sequence ID" value="ENSP00000486677.3"/>
    <property type="gene ID" value="ENSG00000273079.7"/>
</dbReference>
<dbReference type="GeneID" id="2904"/>
<dbReference type="KEGG" id="hsa:2904"/>
<dbReference type="MANE-Select" id="ENST00000609686.4">
    <property type="protein sequence ID" value="ENSP00000477455.1"/>
    <property type="RefSeq nucleotide sequence ID" value="NM_000834.5"/>
    <property type="RefSeq protein sequence ID" value="NP_000825.2"/>
</dbReference>
<dbReference type="UCSC" id="uc001rbt.3">
    <property type="organism name" value="human"/>
</dbReference>
<dbReference type="AGR" id="HGNC:4586"/>
<dbReference type="CTD" id="2904"/>
<dbReference type="DisGeNET" id="2904"/>
<dbReference type="GeneCards" id="GRIN2B"/>
<dbReference type="GeneReviews" id="GRIN2B"/>
<dbReference type="HGNC" id="HGNC:4586">
    <property type="gene designation" value="GRIN2B"/>
</dbReference>
<dbReference type="HPA" id="ENSG00000273079">
    <property type="expression patterns" value="Tissue enriched (brain)"/>
</dbReference>
<dbReference type="MalaCards" id="GRIN2B"/>
<dbReference type="MIM" id="138252">
    <property type="type" value="gene"/>
</dbReference>
<dbReference type="MIM" id="613970">
    <property type="type" value="phenotype"/>
</dbReference>
<dbReference type="MIM" id="616139">
    <property type="type" value="phenotype"/>
</dbReference>
<dbReference type="neXtProt" id="NX_Q13224"/>
<dbReference type="OpenTargets" id="ENSG00000273079"/>
<dbReference type="Orphanet" id="178469">
    <property type="disease" value="Autosomal dominant non-syndromic intellectual disability"/>
</dbReference>
<dbReference type="Orphanet" id="589547">
    <property type="disease" value="GRIN2B-related developmental delay, intellectual disability and autism spectrum disorder"/>
</dbReference>
<dbReference type="Orphanet" id="3451">
    <property type="disease" value="Infantile epileptic spasms syndrome"/>
</dbReference>
<dbReference type="PharmGKB" id="PA28980"/>
<dbReference type="VEuPathDB" id="HostDB:ENSG00000273079"/>
<dbReference type="eggNOG" id="KOG1053">
    <property type="taxonomic scope" value="Eukaryota"/>
</dbReference>
<dbReference type="GeneTree" id="ENSGT00940000155964"/>
<dbReference type="HOGENOM" id="CLU_002598_1_0_1"/>
<dbReference type="InParanoid" id="Q13224"/>
<dbReference type="OMA" id="ECYSPKF"/>
<dbReference type="OrthoDB" id="5984008at2759"/>
<dbReference type="PAN-GO" id="Q13224">
    <property type="GO annotations" value="6 GO annotations based on evolutionary models"/>
</dbReference>
<dbReference type="PhylomeDB" id="Q13224"/>
<dbReference type="TreeFam" id="TF314731"/>
<dbReference type="PathwayCommons" id="Q13224"/>
<dbReference type="Reactome" id="R-HSA-3928662">
    <property type="pathway name" value="EPHB-mediated forward signaling"/>
</dbReference>
<dbReference type="Reactome" id="R-HSA-438066">
    <property type="pathway name" value="Unblocking of NMDA receptors, glutamate binding and activation"/>
</dbReference>
<dbReference type="Reactome" id="R-HSA-442982">
    <property type="pathway name" value="Ras activation upon Ca2+ influx through NMDA receptor"/>
</dbReference>
<dbReference type="Reactome" id="R-HSA-5673001">
    <property type="pathway name" value="RAF/MAP kinase cascade"/>
</dbReference>
<dbReference type="Reactome" id="R-HSA-6794361">
    <property type="pathway name" value="Neurexins and neuroligins"/>
</dbReference>
<dbReference type="Reactome" id="R-HSA-8849932">
    <property type="pathway name" value="Synaptic adhesion-like molecules"/>
</dbReference>
<dbReference type="Reactome" id="R-HSA-9022699">
    <property type="pathway name" value="MECP2 regulates neuronal receptors and channels"/>
</dbReference>
<dbReference type="Reactome" id="R-HSA-9032500">
    <property type="pathway name" value="Activated NTRK2 signals through FYN"/>
</dbReference>
<dbReference type="Reactome" id="R-HSA-9609736">
    <property type="pathway name" value="Assembly and cell surface presentation of NMDA receptors"/>
</dbReference>
<dbReference type="Reactome" id="R-HSA-9617324">
    <property type="pathway name" value="Negative regulation of NMDA receptor-mediated neuronal transmission"/>
</dbReference>
<dbReference type="Reactome" id="R-HSA-9620244">
    <property type="pathway name" value="Long-term potentiation"/>
</dbReference>
<dbReference type="SignaLink" id="Q13224"/>
<dbReference type="SIGNOR" id="Q13224"/>
<dbReference type="BioGRID-ORCS" id="2904">
    <property type="hits" value="15 hits in 1150 CRISPR screens"/>
</dbReference>
<dbReference type="ChiTaRS" id="GRIN2B">
    <property type="organism name" value="human"/>
</dbReference>
<dbReference type="EvolutionaryTrace" id="Q13224"/>
<dbReference type="GeneWiki" id="GRIN2B"/>
<dbReference type="GenomeRNAi" id="2904"/>
<dbReference type="Pharos" id="Q13224">
    <property type="development level" value="Tclin"/>
</dbReference>
<dbReference type="PRO" id="PR:Q13224"/>
<dbReference type="Proteomes" id="UP000005640">
    <property type="component" value="Chromosome 12"/>
</dbReference>
<dbReference type="RNAct" id="Q13224">
    <property type="molecule type" value="protein"/>
</dbReference>
<dbReference type="Bgee" id="ENSG00000273079">
    <property type="expression patterns" value="Expressed in buccal mucosa cell and 114 other cell types or tissues"/>
</dbReference>
<dbReference type="ExpressionAtlas" id="Q13224">
    <property type="expression patterns" value="baseline and differential"/>
</dbReference>
<dbReference type="GO" id="GO:0009986">
    <property type="term" value="C:cell surface"/>
    <property type="evidence" value="ECO:0000250"/>
    <property type="project" value="ARUK-UCL"/>
</dbReference>
<dbReference type="GO" id="GO:0005737">
    <property type="term" value="C:cytoplasm"/>
    <property type="evidence" value="ECO:0000250"/>
    <property type="project" value="ARUK-UCL"/>
</dbReference>
<dbReference type="GO" id="GO:0005856">
    <property type="term" value="C:cytoskeleton"/>
    <property type="evidence" value="ECO:0007669"/>
    <property type="project" value="UniProtKB-SubCell"/>
</dbReference>
<dbReference type="GO" id="GO:0030425">
    <property type="term" value="C:dendrite"/>
    <property type="evidence" value="ECO:0007669"/>
    <property type="project" value="UniProtKB-SubCell"/>
</dbReference>
<dbReference type="GO" id="GO:0005789">
    <property type="term" value="C:endoplasmic reticulum membrane"/>
    <property type="evidence" value="ECO:0000304"/>
    <property type="project" value="Reactome"/>
</dbReference>
<dbReference type="GO" id="GO:0005770">
    <property type="term" value="C:late endosome"/>
    <property type="evidence" value="ECO:0000250"/>
    <property type="project" value="UniProtKB"/>
</dbReference>
<dbReference type="GO" id="GO:0005764">
    <property type="term" value="C:lysosome"/>
    <property type="evidence" value="ECO:0000250"/>
    <property type="project" value="UniProtKB"/>
</dbReference>
<dbReference type="GO" id="GO:0043005">
    <property type="term" value="C:neuron projection"/>
    <property type="evidence" value="ECO:0000250"/>
    <property type="project" value="BHF-UCL"/>
</dbReference>
<dbReference type="GO" id="GO:0017146">
    <property type="term" value="C:NMDA selective glutamate receptor complex"/>
    <property type="evidence" value="ECO:0000314"/>
    <property type="project" value="UniProtKB"/>
</dbReference>
<dbReference type="GO" id="GO:0005886">
    <property type="term" value="C:plasma membrane"/>
    <property type="evidence" value="ECO:0000314"/>
    <property type="project" value="UniProtKB"/>
</dbReference>
<dbReference type="GO" id="GO:0014069">
    <property type="term" value="C:postsynaptic density"/>
    <property type="evidence" value="ECO:0000250"/>
    <property type="project" value="UniProtKB"/>
</dbReference>
<dbReference type="GO" id="GO:0098839">
    <property type="term" value="C:postsynaptic density membrane"/>
    <property type="evidence" value="ECO:0000318"/>
    <property type="project" value="GO_Central"/>
</dbReference>
<dbReference type="GO" id="GO:0045211">
    <property type="term" value="C:postsynaptic membrane"/>
    <property type="evidence" value="ECO:0000250"/>
    <property type="project" value="UniProtKB"/>
</dbReference>
<dbReference type="GO" id="GO:0097060">
    <property type="term" value="C:synaptic membrane"/>
    <property type="evidence" value="ECO:0000250"/>
    <property type="project" value="ARUK-UCL"/>
</dbReference>
<dbReference type="GO" id="GO:0001540">
    <property type="term" value="F:amyloid-beta binding"/>
    <property type="evidence" value="ECO:0000303"/>
    <property type="project" value="ARUK-UCL"/>
</dbReference>
<dbReference type="GO" id="GO:0016595">
    <property type="term" value="F:glutamate binding"/>
    <property type="evidence" value="ECO:0000250"/>
    <property type="project" value="UniProtKB"/>
</dbReference>
<dbReference type="GO" id="GO:0022849">
    <property type="term" value="F:glutamate-gated calcium ion channel activity"/>
    <property type="evidence" value="ECO:0000314"/>
    <property type="project" value="UniProtKB"/>
</dbReference>
<dbReference type="GO" id="GO:0016594">
    <property type="term" value="F:glycine binding"/>
    <property type="evidence" value="ECO:0000314"/>
    <property type="project" value="UniProtKB"/>
</dbReference>
<dbReference type="GO" id="GO:0099507">
    <property type="term" value="F:ligand-gated monoatomic ion channel activity involved in regulation of presynaptic membrane potential"/>
    <property type="evidence" value="ECO:0000314"/>
    <property type="project" value="SynGO"/>
</dbReference>
<dbReference type="GO" id="GO:0004972">
    <property type="term" value="F:NMDA glutamate receptor activity"/>
    <property type="evidence" value="ECO:0000314"/>
    <property type="project" value="UniProtKB"/>
</dbReference>
<dbReference type="GO" id="GO:1904315">
    <property type="term" value="F:transmitter-gated monoatomic ion channel activity involved in regulation of postsynaptic membrane potential"/>
    <property type="evidence" value="ECO:0000318"/>
    <property type="project" value="GO_Central"/>
</dbReference>
<dbReference type="GO" id="GO:0008270">
    <property type="term" value="F:zinc ion binding"/>
    <property type="evidence" value="ECO:0000250"/>
    <property type="project" value="UniProtKB"/>
</dbReference>
<dbReference type="GO" id="GO:0007420">
    <property type="term" value="P:brain development"/>
    <property type="evidence" value="ECO:0000303"/>
    <property type="project" value="ARUK-UCL"/>
</dbReference>
<dbReference type="GO" id="GO:0097553">
    <property type="term" value="P:calcium ion transmembrane import into cytosol"/>
    <property type="evidence" value="ECO:0000314"/>
    <property type="project" value="UniProtKB"/>
</dbReference>
<dbReference type="GO" id="GO:0007268">
    <property type="term" value="P:chemical synaptic transmission"/>
    <property type="evidence" value="ECO:0000304"/>
    <property type="project" value="ProtInc"/>
</dbReference>
<dbReference type="GO" id="GO:0098976">
    <property type="term" value="P:excitatory chemical synaptic transmission"/>
    <property type="evidence" value="ECO:0000303"/>
    <property type="project" value="ARUK-UCL"/>
</dbReference>
<dbReference type="GO" id="GO:0060079">
    <property type="term" value="P:excitatory postsynaptic potential"/>
    <property type="evidence" value="ECO:0000318"/>
    <property type="project" value="GO_Central"/>
</dbReference>
<dbReference type="GO" id="GO:0007215">
    <property type="term" value="P:glutamate receptor signaling pathway"/>
    <property type="evidence" value="ECO:0000304"/>
    <property type="project" value="ProtInc"/>
</dbReference>
<dbReference type="GO" id="GO:0035235">
    <property type="term" value="P:ionotropic glutamate receptor signaling pathway"/>
    <property type="evidence" value="ECO:0000250"/>
    <property type="project" value="ComplexPortal"/>
</dbReference>
<dbReference type="GO" id="GO:0007611">
    <property type="term" value="P:learning or memory"/>
    <property type="evidence" value="ECO:0000250"/>
    <property type="project" value="ARUK-UCL"/>
</dbReference>
<dbReference type="GO" id="GO:0060291">
    <property type="term" value="P:long-term synaptic potentiation"/>
    <property type="evidence" value="ECO:0000318"/>
    <property type="project" value="GO_Central"/>
</dbReference>
<dbReference type="GO" id="GO:0098655">
    <property type="term" value="P:monoatomic cation transmembrane transport"/>
    <property type="evidence" value="ECO:0000314"/>
    <property type="project" value="UniProt"/>
</dbReference>
<dbReference type="GO" id="GO:1902951">
    <property type="term" value="P:negative regulation of dendritic spine maintenance"/>
    <property type="evidence" value="ECO:0000250"/>
    <property type="project" value="ARUK-UCL"/>
</dbReference>
<dbReference type="GO" id="GO:2000463">
    <property type="term" value="P:positive regulation of excitatory postsynaptic potential"/>
    <property type="evidence" value="ECO:0000250"/>
    <property type="project" value="ComplexPortal"/>
</dbReference>
<dbReference type="GO" id="GO:0051968">
    <property type="term" value="P:positive regulation of synaptic transmission, glutamatergic"/>
    <property type="evidence" value="ECO:0000250"/>
    <property type="project" value="ComplexPortal"/>
</dbReference>
<dbReference type="GO" id="GO:0051290">
    <property type="term" value="P:protein heterotetramerization"/>
    <property type="evidence" value="ECO:0000250"/>
    <property type="project" value="UniProtKB"/>
</dbReference>
<dbReference type="GO" id="GO:1904062">
    <property type="term" value="P:regulation of monoatomic cation transmembrane transport"/>
    <property type="evidence" value="ECO:0000250"/>
    <property type="project" value="ComplexPortal"/>
</dbReference>
<dbReference type="GO" id="GO:0048168">
    <property type="term" value="P:regulation of neuronal synaptic plasticity"/>
    <property type="evidence" value="ECO:0000303"/>
    <property type="project" value="ComplexPortal"/>
</dbReference>
<dbReference type="GO" id="GO:0048167">
    <property type="term" value="P:regulation of synaptic plasticity"/>
    <property type="evidence" value="ECO:0000250"/>
    <property type="project" value="UniProt"/>
</dbReference>
<dbReference type="GO" id="GO:0045471">
    <property type="term" value="P:response to ethanol"/>
    <property type="evidence" value="ECO:0000314"/>
    <property type="project" value="UniProtKB"/>
</dbReference>
<dbReference type="GO" id="GO:0035249">
    <property type="term" value="P:synaptic transmission, glutamatergic"/>
    <property type="evidence" value="ECO:0000318"/>
    <property type="project" value="GO_Central"/>
</dbReference>
<dbReference type="CDD" id="cd06378">
    <property type="entry name" value="PBP1_iGluR_NMDA_NR2"/>
    <property type="match status" value="1"/>
</dbReference>
<dbReference type="CDD" id="cd13718">
    <property type="entry name" value="PBP2_iGluR_NMDA_Nr2"/>
    <property type="match status" value="1"/>
</dbReference>
<dbReference type="FunFam" id="3.40.50.2300:FF:000312">
    <property type="entry name" value="Glutamate ionotropic receptor NMDA type subunit 2B"/>
    <property type="match status" value="1"/>
</dbReference>
<dbReference type="FunFam" id="1.10.287.70:FF:000199">
    <property type="entry name" value="Glutamate receptor ionotropic, NMDA 2B"/>
    <property type="match status" value="1"/>
</dbReference>
<dbReference type="FunFam" id="3.40.50.2300:FF:000020">
    <property type="entry name" value="Glutamate receptor ionotropic, NMDA 2B, putative"/>
    <property type="match status" value="1"/>
</dbReference>
<dbReference type="FunFam" id="3.40.190.10:FF:000007">
    <property type="entry name" value="Putative glutamate receptor ionotropic NMDA 2B"/>
    <property type="match status" value="1"/>
</dbReference>
<dbReference type="FunFam" id="3.40.190.10:FF:000038">
    <property type="entry name" value="Putative glutamate receptor ionotropic NMDA 2B"/>
    <property type="match status" value="1"/>
</dbReference>
<dbReference type="Gene3D" id="3.40.50.2300">
    <property type="match status" value="2"/>
</dbReference>
<dbReference type="Gene3D" id="3.40.190.10">
    <property type="entry name" value="Periplasmic binding protein-like II"/>
    <property type="match status" value="3"/>
</dbReference>
<dbReference type="InterPro" id="IPR001828">
    <property type="entry name" value="ANF_lig-bd_rcpt"/>
</dbReference>
<dbReference type="InterPro" id="IPR019594">
    <property type="entry name" value="Glu/Gly-bd"/>
</dbReference>
<dbReference type="InterPro" id="IPR001508">
    <property type="entry name" value="Iono_Glu_rcpt_met"/>
</dbReference>
<dbReference type="InterPro" id="IPR015683">
    <property type="entry name" value="Ionotropic_Glu_rcpt"/>
</dbReference>
<dbReference type="InterPro" id="IPR001320">
    <property type="entry name" value="Iontro_rcpt_C"/>
</dbReference>
<dbReference type="InterPro" id="IPR018884">
    <property type="entry name" value="NMDAR2_C"/>
</dbReference>
<dbReference type="InterPro" id="IPR028082">
    <property type="entry name" value="Peripla_BP_I"/>
</dbReference>
<dbReference type="PANTHER" id="PTHR18966">
    <property type="entry name" value="IONOTROPIC GLUTAMATE RECEPTOR"/>
    <property type="match status" value="1"/>
</dbReference>
<dbReference type="Pfam" id="PF01094">
    <property type="entry name" value="ANF_receptor"/>
    <property type="match status" value="1"/>
</dbReference>
<dbReference type="Pfam" id="PF00060">
    <property type="entry name" value="Lig_chan"/>
    <property type="match status" value="1"/>
</dbReference>
<dbReference type="Pfam" id="PF10613">
    <property type="entry name" value="Lig_chan-Glu_bd"/>
    <property type="match status" value="1"/>
</dbReference>
<dbReference type="Pfam" id="PF10565">
    <property type="entry name" value="NMDAR2_C"/>
    <property type="match status" value="1"/>
</dbReference>
<dbReference type="PRINTS" id="PR00177">
    <property type="entry name" value="NMDARECEPTOR"/>
</dbReference>
<dbReference type="SMART" id="SM00918">
    <property type="entry name" value="Lig_chan-Glu_bd"/>
    <property type="match status" value="1"/>
</dbReference>
<dbReference type="SMART" id="SM00079">
    <property type="entry name" value="PBPe"/>
    <property type="match status" value="1"/>
</dbReference>
<dbReference type="SUPFAM" id="SSF53822">
    <property type="entry name" value="Periplasmic binding protein-like I"/>
    <property type="match status" value="1"/>
</dbReference>
<dbReference type="SUPFAM" id="SSF53850">
    <property type="entry name" value="Periplasmic binding protein-like II"/>
    <property type="match status" value="1"/>
</dbReference>
<gene>
    <name evidence="33 35" type="primary">GRIN2B</name>
    <name evidence="31" type="synonym">NMDAR2B</name>
</gene>
<keyword id="KW-0002">3D-structure</keyword>
<keyword id="KW-0106">Calcium</keyword>
<keyword id="KW-1003">Cell membrane</keyword>
<keyword id="KW-0966">Cell projection</keyword>
<keyword id="KW-0160">Chromosomal rearrangement</keyword>
<keyword id="KW-0963">Cytoplasm</keyword>
<keyword id="KW-0206">Cytoskeleton</keyword>
<keyword id="KW-0225">Disease variant</keyword>
<keyword id="KW-1015">Disulfide bond</keyword>
<keyword id="KW-0967">Endosome</keyword>
<keyword id="KW-0887">Epilepsy</keyword>
<keyword id="KW-0325">Glycoprotein</keyword>
<keyword id="KW-0991">Intellectual disability</keyword>
<keyword id="KW-0407">Ion channel</keyword>
<keyword id="KW-0406">Ion transport</keyword>
<keyword id="KW-1071">Ligand-gated ion channel</keyword>
<keyword id="KW-0458">Lysosome</keyword>
<keyword id="KW-0460">Magnesium</keyword>
<keyword id="KW-0472">Membrane</keyword>
<keyword id="KW-0479">Metal-binding</keyword>
<keyword id="KW-0597">Phosphoprotein</keyword>
<keyword id="KW-0628">Postsynaptic cell membrane</keyword>
<keyword id="KW-1267">Proteomics identification</keyword>
<keyword id="KW-0675">Receptor</keyword>
<keyword id="KW-1185">Reference proteome</keyword>
<keyword id="KW-0732">Signal</keyword>
<keyword id="KW-0770">Synapse</keyword>
<keyword id="KW-0812">Transmembrane</keyword>
<keyword id="KW-1133">Transmembrane helix</keyword>
<keyword id="KW-0813">Transport</keyword>
<keyword id="KW-0862">Zinc</keyword>